<proteinExistence type="evidence at protein level"/>
<accession>P20436</accession>
<accession>D6W2S9</accession>
<comment type="function">
    <text evidence="8 9 10">DNA-dependent RNA polymerases catalyze the transcription. of DNA into RNA using the four ribonucleoside triphosphates as substrates. Common component of RNA polymerases I, II and III which synthesize ribosomal RNA precursors, mRNA precursors and many functional non-coding RNAs, and small RNAs, such as 5S rRNA and tRNAs, respectively.</text>
</comment>
<comment type="subunit">
    <text evidence="2 3 4 7 8 9 10">Component of the RNA polymerase I (Pol I), RNA polymerase II (Pol II) and RNA polymerase III (Pol III) complexes. Component of the RNA polymerase I (Pol I) complex consisting of 14 subunits: RPA135, RPA190, RPC40, RPA14, RPB5, RPO26, RPA43, RPB8, RPA12, RPB10, RPC19, RPC10, RPA49 and RPA34. The complex is composed of a horseshoe-shaped core containing ten subunits (RPA135, RPA190, RPB5, RPO26, RPB8, RPB10, RPC10, RPA12, RPC19 and RPC40) where RPA135 and RPA190 form the DNA-binding cleft. Outside of the core, RPA14 and RPA43 form the stalk that mediates interactions with transcription initiation factors and newly synthesized RNA. Component of the RNA polymerase II (Pol II) complex consisting of 12 subunits: RPO21, RPB2, RPB3, RPB4, RPB5, RPO26, RPB7, RPB8, RPB9, RPB10 and RPC10. Component of the RNA polymerase III (Pol III) complex consisting of 17 subunits. Directly interacts with POLR2A.</text>
</comment>
<comment type="interaction">
    <interactant intactId="EBI-15794">
        <id>P20436</id>
    </interactant>
    <interactant intactId="EBI-15806">
        <id>P38902</id>
        <label>RPB11</label>
    </interactant>
    <organismsDiffer>false</organismsDiffer>
    <experiments>4</experiments>
</comment>
<comment type="interaction">
    <interactant intactId="EBI-15794">
        <id>P20436</id>
    </interactant>
    <interactant intactId="EBI-15781">
        <id>P20434</id>
        <label>RPB5</label>
    </interactant>
    <organismsDiffer>false</organismsDiffer>
    <experiments>32</experiments>
</comment>
<comment type="interaction">
    <interactant intactId="EBI-15794">
        <id>P20436</id>
    </interactant>
    <interactant intactId="EBI-15798">
        <id>P27999</id>
        <label>RPB9</label>
    </interactant>
    <organismsDiffer>false</organismsDiffer>
    <experiments>4</experiments>
</comment>
<comment type="interaction">
    <interactant intactId="EBI-15794">
        <id>P20436</id>
    </interactant>
    <interactant intactId="EBI-25782">
        <id>P47076</id>
        <label>RPC17</label>
    </interactant>
    <organismsDiffer>false</organismsDiffer>
    <experiments>3</experiments>
</comment>
<comment type="interaction">
    <interactant intactId="EBI-15794">
        <id>P20436</id>
    </interactant>
    <interactant intactId="EBI-15835">
        <id>P32910</id>
        <label>RPC34</label>
    </interactant>
    <organismsDiffer>false</organismsDiffer>
    <experiments>3</experiments>
</comment>
<comment type="interaction">
    <interactant intactId="EBI-15794">
        <id>P20436</id>
    </interactant>
    <interactant intactId="EBI-15831">
        <id>P07703</id>
        <label>RPC40</label>
    </interactant>
    <organismsDiffer>false</organismsDiffer>
    <experiments>4</experiments>
</comment>
<comment type="interaction">
    <interactant intactId="EBI-15794">
        <id>P20436</id>
    </interactant>
    <interactant intactId="EBI-16219">
        <id>P39940</id>
        <label>RSP5</label>
    </interactant>
    <organismsDiffer>false</organismsDiffer>
    <experiments>3</experiments>
</comment>
<comment type="subcellular location">
    <subcellularLocation>
        <location evidence="5">Nucleus</location>
    </subcellularLocation>
</comment>
<comment type="miscellaneous">
    <text evidence="6">Present with 6210 molecules/cell in log phase SD medium.</text>
</comment>
<comment type="similarity">
    <text evidence="11">Belongs to the eukaryotic RPB8 RNA polymerase subunit family.</text>
</comment>
<name>RPAB3_YEAST</name>
<dbReference type="EMBL" id="X53289">
    <property type="protein sequence ID" value="CAA37383.1"/>
    <property type="molecule type" value="Genomic_DNA"/>
</dbReference>
<dbReference type="EMBL" id="X92441">
    <property type="protein sequence ID" value="CAA63187.1"/>
    <property type="molecule type" value="Genomic_DNA"/>
</dbReference>
<dbReference type="EMBL" id="Z75132">
    <property type="protein sequence ID" value="CAA99443.1"/>
    <property type="molecule type" value="Genomic_DNA"/>
</dbReference>
<dbReference type="EMBL" id="AY693087">
    <property type="protein sequence ID" value="AAT93106.1"/>
    <property type="molecule type" value="Genomic_DNA"/>
</dbReference>
<dbReference type="EMBL" id="BK006948">
    <property type="protein sequence ID" value="DAA10995.1"/>
    <property type="molecule type" value="Genomic_DNA"/>
</dbReference>
<dbReference type="PIR" id="C34588">
    <property type="entry name" value="C34588"/>
</dbReference>
<dbReference type="RefSeq" id="NP_014867.1">
    <property type="nucleotide sequence ID" value="NM_001183643.1"/>
</dbReference>
<dbReference type="PDB" id="1A1D">
    <property type="method" value="NMR"/>
    <property type="chains" value="A=1-146"/>
</dbReference>
<dbReference type="PDB" id="1I3Q">
    <property type="method" value="X-ray"/>
    <property type="resolution" value="3.10 A"/>
    <property type="chains" value="H=1-146"/>
</dbReference>
<dbReference type="PDB" id="1I50">
    <property type="method" value="X-ray"/>
    <property type="resolution" value="2.80 A"/>
    <property type="chains" value="H=1-146"/>
</dbReference>
<dbReference type="PDB" id="1I6H">
    <property type="method" value="X-ray"/>
    <property type="resolution" value="3.30 A"/>
    <property type="chains" value="H=1-146"/>
</dbReference>
<dbReference type="PDB" id="1K83">
    <property type="method" value="X-ray"/>
    <property type="resolution" value="2.80 A"/>
    <property type="chains" value="H=1-146"/>
</dbReference>
<dbReference type="PDB" id="1NIK">
    <property type="method" value="X-ray"/>
    <property type="resolution" value="4.10 A"/>
    <property type="chains" value="H=1-146"/>
</dbReference>
<dbReference type="PDB" id="1NT9">
    <property type="method" value="X-ray"/>
    <property type="resolution" value="4.20 A"/>
    <property type="chains" value="H=1-146"/>
</dbReference>
<dbReference type="PDB" id="1PQV">
    <property type="method" value="X-ray"/>
    <property type="resolution" value="3.80 A"/>
    <property type="chains" value="H=1-146"/>
</dbReference>
<dbReference type="PDB" id="1R5U">
    <property type="method" value="X-ray"/>
    <property type="resolution" value="4.50 A"/>
    <property type="chains" value="H=1-146"/>
</dbReference>
<dbReference type="PDB" id="1R9S">
    <property type="method" value="X-ray"/>
    <property type="resolution" value="4.25 A"/>
    <property type="chains" value="H=1-146"/>
</dbReference>
<dbReference type="PDB" id="1R9T">
    <property type="method" value="X-ray"/>
    <property type="resolution" value="3.50 A"/>
    <property type="chains" value="H=1-146"/>
</dbReference>
<dbReference type="PDB" id="1SFO">
    <property type="method" value="X-ray"/>
    <property type="resolution" value="3.61 A"/>
    <property type="chains" value="H=1-146"/>
</dbReference>
<dbReference type="PDB" id="1TWA">
    <property type="method" value="X-ray"/>
    <property type="resolution" value="3.20 A"/>
    <property type="chains" value="H=1-146"/>
</dbReference>
<dbReference type="PDB" id="1TWC">
    <property type="method" value="X-ray"/>
    <property type="resolution" value="3.00 A"/>
    <property type="chains" value="H=1-146"/>
</dbReference>
<dbReference type="PDB" id="1TWF">
    <property type="method" value="X-ray"/>
    <property type="resolution" value="2.30 A"/>
    <property type="chains" value="H=1-146"/>
</dbReference>
<dbReference type="PDB" id="1TWG">
    <property type="method" value="X-ray"/>
    <property type="resolution" value="3.30 A"/>
    <property type="chains" value="H=1-146"/>
</dbReference>
<dbReference type="PDB" id="1TWH">
    <property type="method" value="X-ray"/>
    <property type="resolution" value="3.40 A"/>
    <property type="chains" value="H=1-146"/>
</dbReference>
<dbReference type="PDB" id="1WCM">
    <property type="method" value="X-ray"/>
    <property type="resolution" value="3.80 A"/>
    <property type="chains" value="H=1-146"/>
</dbReference>
<dbReference type="PDB" id="1Y1V">
    <property type="method" value="X-ray"/>
    <property type="resolution" value="3.80 A"/>
    <property type="chains" value="H=1-146"/>
</dbReference>
<dbReference type="PDB" id="1Y1W">
    <property type="method" value="X-ray"/>
    <property type="resolution" value="4.00 A"/>
    <property type="chains" value="H=1-146"/>
</dbReference>
<dbReference type="PDB" id="1Y1Y">
    <property type="method" value="X-ray"/>
    <property type="resolution" value="4.00 A"/>
    <property type="chains" value="H=1-146"/>
</dbReference>
<dbReference type="PDB" id="1Y77">
    <property type="method" value="X-ray"/>
    <property type="resolution" value="4.50 A"/>
    <property type="chains" value="H=1-146"/>
</dbReference>
<dbReference type="PDB" id="2B63">
    <property type="method" value="X-ray"/>
    <property type="resolution" value="3.80 A"/>
    <property type="chains" value="H=1-146"/>
</dbReference>
<dbReference type="PDB" id="2B8K">
    <property type="method" value="X-ray"/>
    <property type="resolution" value="4.15 A"/>
    <property type="chains" value="H=1-146"/>
</dbReference>
<dbReference type="PDB" id="2E2H">
    <property type="method" value="X-ray"/>
    <property type="resolution" value="3.95 A"/>
    <property type="chains" value="H=1-146"/>
</dbReference>
<dbReference type="PDB" id="2E2I">
    <property type="method" value="X-ray"/>
    <property type="resolution" value="3.41 A"/>
    <property type="chains" value="H=1-146"/>
</dbReference>
<dbReference type="PDB" id="2E2J">
    <property type="method" value="X-ray"/>
    <property type="resolution" value="3.50 A"/>
    <property type="chains" value="H=1-146"/>
</dbReference>
<dbReference type="PDB" id="2JA5">
    <property type="method" value="X-ray"/>
    <property type="resolution" value="3.80 A"/>
    <property type="chains" value="H=1-146"/>
</dbReference>
<dbReference type="PDB" id="2JA6">
    <property type="method" value="X-ray"/>
    <property type="resolution" value="4.00 A"/>
    <property type="chains" value="H=1-146"/>
</dbReference>
<dbReference type="PDB" id="2JA7">
    <property type="method" value="X-ray"/>
    <property type="resolution" value="3.80 A"/>
    <property type="chains" value="H/T=1-146"/>
</dbReference>
<dbReference type="PDB" id="2JA8">
    <property type="method" value="X-ray"/>
    <property type="resolution" value="3.80 A"/>
    <property type="chains" value="H=1-146"/>
</dbReference>
<dbReference type="PDB" id="2NVQ">
    <property type="method" value="X-ray"/>
    <property type="resolution" value="2.90 A"/>
    <property type="chains" value="H=1-146"/>
</dbReference>
<dbReference type="PDB" id="2NVT">
    <property type="method" value="X-ray"/>
    <property type="resolution" value="3.36 A"/>
    <property type="chains" value="H=1-146"/>
</dbReference>
<dbReference type="PDB" id="2NVX">
    <property type="method" value="X-ray"/>
    <property type="resolution" value="3.60 A"/>
    <property type="chains" value="H=1-146"/>
</dbReference>
<dbReference type="PDB" id="2NVY">
    <property type="method" value="X-ray"/>
    <property type="resolution" value="3.40 A"/>
    <property type="chains" value="H=1-146"/>
</dbReference>
<dbReference type="PDB" id="2NVZ">
    <property type="method" value="X-ray"/>
    <property type="resolution" value="4.30 A"/>
    <property type="chains" value="H=1-146"/>
</dbReference>
<dbReference type="PDB" id="2R7Z">
    <property type="method" value="X-ray"/>
    <property type="resolution" value="3.80 A"/>
    <property type="chains" value="H=1-146"/>
</dbReference>
<dbReference type="PDB" id="2R92">
    <property type="method" value="X-ray"/>
    <property type="resolution" value="3.80 A"/>
    <property type="chains" value="H=1-146"/>
</dbReference>
<dbReference type="PDB" id="2R93">
    <property type="method" value="X-ray"/>
    <property type="resolution" value="4.00 A"/>
    <property type="chains" value="H=1-146"/>
</dbReference>
<dbReference type="PDB" id="2VUM">
    <property type="method" value="X-ray"/>
    <property type="resolution" value="3.40 A"/>
    <property type="chains" value="H=1-146"/>
</dbReference>
<dbReference type="PDB" id="2YU9">
    <property type="method" value="X-ray"/>
    <property type="resolution" value="3.40 A"/>
    <property type="chains" value="H=1-146"/>
</dbReference>
<dbReference type="PDB" id="3CQZ">
    <property type="method" value="X-ray"/>
    <property type="resolution" value="2.80 A"/>
    <property type="chains" value="H=1-146"/>
</dbReference>
<dbReference type="PDB" id="3FKI">
    <property type="method" value="X-ray"/>
    <property type="resolution" value="3.88 A"/>
    <property type="chains" value="H=1-146"/>
</dbReference>
<dbReference type="PDB" id="3GTG">
    <property type="method" value="X-ray"/>
    <property type="resolution" value="3.78 A"/>
    <property type="chains" value="H=1-146"/>
</dbReference>
<dbReference type="PDB" id="3GTJ">
    <property type="method" value="X-ray"/>
    <property type="resolution" value="3.42 A"/>
    <property type="chains" value="H=1-146"/>
</dbReference>
<dbReference type="PDB" id="3GTK">
    <property type="method" value="X-ray"/>
    <property type="resolution" value="3.80 A"/>
    <property type="chains" value="H=1-146"/>
</dbReference>
<dbReference type="PDB" id="3GTL">
    <property type="method" value="X-ray"/>
    <property type="resolution" value="3.38 A"/>
    <property type="chains" value="H=1-146"/>
</dbReference>
<dbReference type="PDB" id="3GTM">
    <property type="method" value="X-ray"/>
    <property type="resolution" value="3.80 A"/>
    <property type="chains" value="H=1-146"/>
</dbReference>
<dbReference type="PDB" id="3GTO">
    <property type="method" value="X-ray"/>
    <property type="resolution" value="4.00 A"/>
    <property type="chains" value="H=1-146"/>
</dbReference>
<dbReference type="PDB" id="3GTP">
    <property type="method" value="X-ray"/>
    <property type="resolution" value="3.90 A"/>
    <property type="chains" value="H=1-146"/>
</dbReference>
<dbReference type="PDB" id="3GTQ">
    <property type="method" value="X-ray"/>
    <property type="resolution" value="3.80 A"/>
    <property type="chains" value="H=1-146"/>
</dbReference>
<dbReference type="PDB" id="3H3V">
    <property type="method" value="X-ray"/>
    <property type="resolution" value="4.00 A"/>
    <property type="chains" value="I=1-146"/>
</dbReference>
<dbReference type="PDB" id="3HOU">
    <property type="method" value="X-ray"/>
    <property type="resolution" value="3.20 A"/>
    <property type="chains" value="H/T=1-146"/>
</dbReference>
<dbReference type="PDB" id="3HOV">
    <property type="method" value="X-ray"/>
    <property type="resolution" value="3.50 A"/>
    <property type="chains" value="H=1-146"/>
</dbReference>
<dbReference type="PDB" id="3HOW">
    <property type="method" value="X-ray"/>
    <property type="resolution" value="3.60 A"/>
    <property type="chains" value="H=1-146"/>
</dbReference>
<dbReference type="PDB" id="3HOX">
    <property type="method" value="X-ray"/>
    <property type="resolution" value="3.65 A"/>
    <property type="chains" value="H=1-146"/>
</dbReference>
<dbReference type="PDB" id="3HOY">
    <property type="method" value="X-ray"/>
    <property type="resolution" value="3.40 A"/>
    <property type="chains" value="H=1-146"/>
</dbReference>
<dbReference type="PDB" id="3HOZ">
    <property type="method" value="X-ray"/>
    <property type="resolution" value="3.65 A"/>
    <property type="chains" value="H=1-146"/>
</dbReference>
<dbReference type="PDB" id="3I4M">
    <property type="method" value="X-ray"/>
    <property type="resolution" value="3.70 A"/>
    <property type="chains" value="H=1-146"/>
</dbReference>
<dbReference type="PDB" id="3I4N">
    <property type="method" value="X-ray"/>
    <property type="resolution" value="3.90 A"/>
    <property type="chains" value="H=1-146"/>
</dbReference>
<dbReference type="PDB" id="3J0K">
    <property type="method" value="EM"/>
    <property type="resolution" value="36.00 A"/>
    <property type="chains" value="H=1-146"/>
</dbReference>
<dbReference type="PDB" id="3J1N">
    <property type="method" value="EM"/>
    <property type="resolution" value="16.00 A"/>
    <property type="chains" value="H=1-146"/>
</dbReference>
<dbReference type="PDB" id="3K1F">
    <property type="method" value="X-ray"/>
    <property type="resolution" value="4.30 A"/>
    <property type="chains" value="H=1-146"/>
</dbReference>
<dbReference type="PDB" id="3K7A">
    <property type="method" value="X-ray"/>
    <property type="resolution" value="3.80 A"/>
    <property type="chains" value="H=1-146"/>
</dbReference>
<dbReference type="PDB" id="3M3Y">
    <property type="method" value="X-ray"/>
    <property type="resolution" value="3.18 A"/>
    <property type="chains" value="H=1-146"/>
</dbReference>
<dbReference type="PDB" id="3M4O">
    <property type="method" value="X-ray"/>
    <property type="resolution" value="3.57 A"/>
    <property type="chains" value="H=1-146"/>
</dbReference>
<dbReference type="PDB" id="3PO2">
    <property type="method" value="X-ray"/>
    <property type="resolution" value="3.30 A"/>
    <property type="chains" value="H=1-146"/>
</dbReference>
<dbReference type="PDB" id="3PO3">
    <property type="method" value="X-ray"/>
    <property type="resolution" value="3.30 A"/>
    <property type="chains" value="H=1-146"/>
</dbReference>
<dbReference type="PDB" id="3QT1">
    <property type="method" value="X-ray"/>
    <property type="resolution" value="4.30 A"/>
    <property type="chains" value="H=1-146"/>
</dbReference>
<dbReference type="PDB" id="3RZD">
    <property type="method" value="X-ray"/>
    <property type="resolution" value="3.30 A"/>
    <property type="chains" value="H=1-146"/>
</dbReference>
<dbReference type="PDB" id="3RZO">
    <property type="method" value="X-ray"/>
    <property type="resolution" value="3.00 A"/>
    <property type="chains" value="H=1-146"/>
</dbReference>
<dbReference type="PDB" id="3S14">
    <property type="method" value="X-ray"/>
    <property type="resolution" value="2.85 A"/>
    <property type="chains" value="H=1-146"/>
</dbReference>
<dbReference type="PDB" id="3S15">
    <property type="method" value="X-ray"/>
    <property type="resolution" value="3.30 A"/>
    <property type="chains" value="H=1-146"/>
</dbReference>
<dbReference type="PDB" id="3S16">
    <property type="method" value="X-ray"/>
    <property type="resolution" value="3.24 A"/>
    <property type="chains" value="H=1-146"/>
</dbReference>
<dbReference type="PDB" id="3S17">
    <property type="method" value="X-ray"/>
    <property type="resolution" value="3.20 A"/>
    <property type="chains" value="H=1-146"/>
</dbReference>
<dbReference type="PDB" id="3S1M">
    <property type="method" value="X-ray"/>
    <property type="resolution" value="3.13 A"/>
    <property type="chains" value="H=1-146"/>
</dbReference>
<dbReference type="PDB" id="3S1N">
    <property type="method" value="X-ray"/>
    <property type="resolution" value="3.10 A"/>
    <property type="chains" value="H=1-146"/>
</dbReference>
<dbReference type="PDB" id="3S1Q">
    <property type="method" value="X-ray"/>
    <property type="resolution" value="3.30 A"/>
    <property type="chains" value="H=1-146"/>
</dbReference>
<dbReference type="PDB" id="3S1R">
    <property type="method" value="X-ray"/>
    <property type="resolution" value="3.20 A"/>
    <property type="chains" value="H=1-146"/>
</dbReference>
<dbReference type="PDB" id="3S2D">
    <property type="method" value="X-ray"/>
    <property type="resolution" value="3.20 A"/>
    <property type="chains" value="H=1-146"/>
</dbReference>
<dbReference type="PDB" id="3S2H">
    <property type="method" value="X-ray"/>
    <property type="resolution" value="3.30 A"/>
    <property type="chains" value="H=1-146"/>
</dbReference>
<dbReference type="PDB" id="4A3B">
    <property type="method" value="X-ray"/>
    <property type="resolution" value="3.50 A"/>
    <property type="chains" value="H=1-146"/>
</dbReference>
<dbReference type="PDB" id="4A3C">
    <property type="method" value="X-ray"/>
    <property type="resolution" value="3.50 A"/>
    <property type="chains" value="H=1-146"/>
</dbReference>
<dbReference type="PDB" id="4A3D">
    <property type="method" value="X-ray"/>
    <property type="resolution" value="3.40 A"/>
    <property type="chains" value="H=1-146"/>
</dbReference>
<dbReference type="PDB" id="4A3E">
    <property type="method" value="X-ray"/>
    <property type="resolution" value="3.40 A"/>
    <property type="chains" value="H=1-146"/>
</dbReference>
<dbReference type="PDB" id="4A3F">
    <property type="method" value="X-ray"/>
    <property type="resolution" value="3.50 A"/>
    <property type="chains" value="H=1-146"/>
</dbReference>
<dbReference type="PDB" id="4A3G">
    <property type="method" value="X-ray"/>
    <property type="resolution" value="3.50 A"/>
    <property type="chains" value="H=1-146"/>
</dbReference>
<dbReference type="PDB" id="4A3I">
    <property type="method" value="X-ray"/>
    <property type="resolution" value="3.80 A"/>
    <property type="chains" value="H=1-146"/>
</dbReference>
<dbReference type="PDB" id="4A3J">
    <property type="method" value="X-ray"/>
    <property type="resolution" value="3.70 A"/>
    <property type="chains" value="H=1-146"/>
</dbReference>
<dbReference type="PDB" id="4A3K">
    <property type="method" value="X-ray"/>
    <property type="resolution" value="3.50 A"/>
    <property type="chains" value="H=1-146"/>
</dbReference>
<dbReference type="PDB" id="4A3L">
    <property type="method" value="X-ray"/>
    <property type="resolution" value="3.50 A"/>
    <property type="chains" value="H=1-146"/>
</dbReference>
<dbReference type="PDB" id="4A3M">
    <property type="method" value="X-ray"/>
    <property type="resolution" value="3.90 A"/>
    <property type="chains" value="H=1-146"/>
</dbReference>
<dbReference type="PDB" id="4A93">
    <property type="method" value="X-ray"/>
    <property type="resolution" value="3.40 A"/>
    <property type="chains" value="H=1-146"/>
</dbReference>
<dbReference type="PDB" id="4BBR">
    <property type="method" value="X-ray"/>
    <property type="resolution" value="3.40 A"/>
    <property type="chains" value="H=1-146"/>
</dbReference>
<dbReference type="PDB" id="4BBS">
    <property type="method" value="X-ray"/>
    <property type="resolution" value="3.60 A"/>
    <property type="chains" value="H=1-146"/>
</dbReference>
<dbReference type="PDB" id="4BXX">
    <property type="method" value="X-ray"/>
    <property type="resolution" value="3.28 A"/>
    <property type="chains" value="H=1-146"/>
</dbReference>
<dbReference type="PDB" id="4BXZ">
    <property type="method" value="X-ray"/>
    <property type="resolution" value="4.80 A"/>
    <property type="chains" value="H=1-146"/>
</dbReference>
<dbReference type="PDB" id="4BY1">
    <property type="method" value="X-ray"/>
    <property type="resolution" value="3.60 A"/>
    <property type="chains" value="H=1-146"/>
</dbReference>
<dbReference type="PDB" id="4BY7">
    <property type="method" value="X-ray"/>
    <property type="resolution" value="3.15 A"/>
    <property type="chains" value="H=1-146"/>
</dbReference>
<dbReference type="PDB" id="4C2M">
    <property type="method" value="X-ray"/>
    <property type="resolution" value="2.80 A"/>
    <property type="chains" value="H/W=1-146"/>
</dbReference>
<dbReference type="PDB" id="4C3H">
    <property type="method" value="X-ray"/>
    <property type="resolution" value="3.27 A"/>
    <property type="chains" value="H=1-146"/>
</dbReference>
<dbReference type="PDB" id="4C3I">
    <property type="method" value="X-ray"/>
    <property type="resolution" value="3.00 A"/>
    <property type="chains" value="H=1-146"/>
</dbReference>
<dbReference type="PDB" id="4C3J">
    <property type="method" value="X-ray"/>
    <property type="resolution" value="3.35 A"/>
    <property type="chains" value="H=1-146"/>
</dbReference>
<dbReference type="PDB" id="4V1M">
    <property type="method" value="EM"/>
    <property type="resolution" value="6.60 A"/>
    <property type="chains" value="H=1-146"/>
</dbReference>
<dbReference type="PDB" id="4V1N">
    <property type="method" value="EM"/>
    <property type="resolution" value="7.80 A"/>
    <property type="chains" value="H=1-146"/>
</dbReference>
<dbReference type="PDB" id="4V1O">
    <property type="method" value="EM"/>
    <property type="resolution" value="9.70 A"/>
    <property type="chains" value="H=1-146"/>
</dbReference>
<dbReference type="PDB" id="4X67">
    <property type="method" value="X-ray"/>
    <property type="resolution" value="4.10 A"/>
    <property type="chains" value="H=1-146"/>
</dbReference>
<dbReference type="PDB" id="4X6A">
    <property type="method" value="X-ray"/>
    <property type="resolution" value="3.96 A"/>
    <property type="chains" value="H=1-146"/>
</dbReference>
<dbReference type="PDB" id="4Y52">
    <property type="method" value="X-ray"/>
    <property type="resolution" value="3.50 A"/>
    <property type="chains" value="H=1-146"/>
</dbReference>
<dbReference type="PDB" id="4Y7N">
    <property type="method" value="X-ray"/>
    <property type="resolution" value="3.30 A"/>
    <property type="chains" value="H=1-146"/>
</dbReference>
<dbReference type="PDB" id="4YM7">
    <property type="method" value="X-ray"/>
    <property type="resolution" value="5.50 A"/>
    <property type="chains" value="AH/BH/CH/DH/EH/FH=1-146"/>
</dbReference>
<dbReference type="PDB" id="5C3E">
    <property type="method" value="X-ray"/>
    <property type="resolution" value="3.70 A"/>
    <property type="chains" value="H=1-146"/>
</dbReference>
<dbReference type="PDB" id="5C44">
    <property type="method" value="X-ray"/>
    <property type="resolution" value="3.95 A"/>
    <property type="chains" value="H=1-146"/>
</dbReference>
<dbReference type="PDB" id="5C4A">
    <property type="method" value="X-ray"/>
    <property type="resolution" value="4.20 A"/>
    <property type="chains" value="H=1-146"/>
</dbReference>
<dbReference type="PDB" id="5C4J">
    <property type="method" value="X-ray"/>
    <property type="resolution" value="4.00 A"/>
    <property type="chains" value="H=1-146"/>
</dbReference>
<dbReference type="PDB" id="5C4X">
    <property type="method" value="X-ray"/>
    <property type="resolution" value="4.00 A"/>
    <property type="chains" value="H=1-146"/>
</dbReference>
<dbReference type="PDB" id="5FJ8">
    <property type="method" value="EM"/>
    <property type="resolution" value="3.90 A"/>
    <property type="chains" value="H=1-146"/>
</dbReference>
<dbReference type="PDB" id="5FJ9">
    <property type="method" value="EM"/>
    <property type="resolution" value="4.60 A"/>
    <property type="chains" value="H=1-146"/>
</dbReference>
<dbReference type="PDB" id="5FJA">
    <property type="method" value="EM"/>
    <property type="resolution" value="4.65 A"/>
    <property type="chains" value="H=1-146"/>
</dbReference>
<dbReference type="PDB" id="5FMF">
    <property type="method" value="EM"/>
    <property type="resolution" value="6.00 A"/>
    <property type="chains" value="H=1-146"/>
</dbReference>
<dbReference type="PDB" id="5FYW">
    <property type="method" value="EM"/>
    <property type="resolution" value="4.35 A"/>
    <property type="chains" value="H=1-146"/>
</dbReference>
<dbReference type="PDB" id="5FZ5">
    <property type="method" value="EM"/>
    <property type="resolution" value="8.80 A"/>
    <property type="chains" value="H=1-146"/>
</dbReference>
<dbReference type="PDB" id="5G5L">
    <property type="method" value="EM"/>
    <property type="resolution" value="4.80 A"/>
    <property type="chains" value="H=1-146"/>
</dbReference>
<dbReference type="PDB" id="5IP7">
    <property type="method" value="X-ray"/>
    <property type="resolution" value="3.52 A"/>
    <property type="chains" value="H=2-146"/>
</dbReference>
<dbReference type="PDB" id="5IP9">
    <property type="method" value="X-ray"/>
    <property type="resolution" value="3.90 A"/>
    <property type="chains" value="H=2-146"/>
</dbReference>
<dbReference type="PDB" id="5LMX">
    <property type="method" value="EM"/>
    <property type="resolution" value="4.90 A"/>
    <property type="chains" value="H=1-146"/>
</dbReference>
<dbReference type="PDB" id="5M3F">
    <property type="method" value="EM"/>
    <property type="resolution" value="3.80 A"/>
    <property type="chains" value="H=1-146"/>
</dbReference>
<dbReference type="PDB" id="5M3M">
    <property type="method" value="EM"/>
    <property type="resolution" value="4.00 A"/>
    <property type="chains" value="H=1-146"/>
</dbReference>
<dbReference type="PDB" id="5M5W">
    <property type="method" value="EM"/>
    <property type="resolution" value="3.80 A"/>
    <property type="chains" value="H=1-146"/>
</dbReference>
<dbReference type="PDB" id="5M5X">
    <property type="method" value="EM"/>
    <property type="resolution" value="4.00 A"/>
    <property type="chains" value="H=1-146"/>
</dbReference>
<dbReference type="PDB" id="5M5Y">
    <property type="method" value="EM"/>
    <property type="resolution" value="4.00 A"/>
    <property type="chains" value="H=1-146"/>
</dbReference>
<dbReference type="PDB" id="5M64">
    <property type="method" value="EM"/>
    <property type="resolution" value="4.60 A"/>
    <property type="chains" value="H=1-146"/>
</dbReference>
<dbReference type="PDB" id="5N5Y">
    <property type="method" value="EM"/>
    <property type="resolution" value="7.70 A"/>
    <property type="chains" value="H=1-146"/>
</dbReference>
<dbReference type="PDB" id="5N5Z">
    <property type="method" value="EM"/>
    <property type="resolution" value="7.70 A"/>
    <property type="chains" value="H=1-146"/>
</dbReference>
<dbReference type="PDB" id="5N60">
    <property type="method" value="EM"/>
    <property type="resolution" value="7.70 A"/>
    <property type="chains" value="H=1-146"/>
</dbReference>
<dbReference type="PDB" id="5N61">
    <property type="method" value="EM"/>
    <property type="resolution" value="3.40 A"/>
    <property type="chains" value="H=1-146"/>
</dbReference>
<dbReference type="PDB" id="5OA1">
    <property type="method" value="EM"/>
    <property type="resolution" value="4.40 A"/>
    <property type="chains" value="H=1-146"/>
</dbReference>
<dbReference type="PDB" id="5OQJ">
    <property type="method" value="EM"/>
    <property type="resolution" value="4.70 A"/>
    <property type="chains" value="H=1-146"/>
</dbReference>
<dbReference type="PDB" id="5OQM">
    <property type="method" value="EM"/>
    <property type="resolution" value="5.80 A"/>
    <property type="chains" value="H=1-146"/>
</dbReference>
<dbReference type="PDB" id="5OT2">
    <property type="method" value="X-ray"/>
    <property type="resolution" value="3.20 A"/>
    <property type="chains" value="H=1-146"/>
</dbReference>
<dbReference type="PDB" id="5SVA">
    <property type="method" value="EM"/>
    <property type="resolution" value="15.30 A"/>
    <property type="chains" value="H=1-146"/>
</dbReference>
<dbReference type="PDB" id="5U5Q">
    <property type="method" value="X-ray"/>
    <property type="resolution" value="3.80 A"/>
    <property type="chains" value="H=1-146"/>
</dbReference>
<dbReference type="PDB" id="5VVR">
    <property type="method" value="EM"/>
    <property type="resolution" value="5.80 A"/>
    <property type="chains" value="H=1-146"/>
</dbReference>
<dbReference type="PDB" id="5VVS">
    <property type="method" value="EM"/>
    <property type="resolution" value="6.40 A"/>
    <property type="chains" value="H=1-146"/>
</dbReference>
<dbReference type="PDB" id="5W4U">
    <property type="method" value="X-ray"/>
    <property type="resolution" value="3.60 A"/>
    <property type="chains" value="H=1-146"/>
</dbReference>
<dbReference type="PDB" id="5W51">
    <property type="method" value="X-ray"/>
    <property type="resolution" value="3.40 A"/>
    <property type="chains" value="H=1-146"/>
</dbReference>
<dbReference type="PDB" id="5W5Y">
    <property type="method" value="EM"/>
    <property type="resolution" value="3.80 A"/>
    <property type="chains" value="H=1-146"/>
</dbReference>
<dbReference type="PDB" id="5W64">
    <property type="method" value="EM"/>
    <property type="resolution" value="4.20 A"/>
    <property type="chains" value="H=1-146"/>
</dbReference>
<dbReference type="PDB" id="5W65">
    <property type="method" value="EM"/>
    <property type="resolution" value="4.30 A"/>
    <property type="chains" value="H=1-146"/>
</dbReference>
<dbReference type="PDB" id="5W66">
    <property type="method" value="EM"/>
    <property type="resolution" value="3.90 A"/>
    <property type="chains" value="H=1-146"/>
</dbReference>
<dbReference type="PDB" id="6BLO">
    <property type="method" value="X-ray"/>
    <property type="resolution" value="3.40 A"/>
    <property type="chains" value="H=1-146"/>
</dbReference>
<dbReference type="PDB" id="6BLP">
    <property type="method" value="X-ray"/>
    <property type="resolution" value="3.20 A"/>
    <property type="chains" value="H=1-146"/>
</dbReference>
<dbReference type="PDB" id="6BM2">
    <property type="method" value="X-ray"/>
    <property type="resolution" value="3.40 A"/>
    <property type="chains" value="H=1-146"/>
</dbReference>
<dbReference type="PDB" id="6BM4">
    <property type="method" value="X-ray"/>
    <property type="resolution" value="2.95 A"/>
    <property type="chains" value="H=1-146"/>
</dbReference>
<dbReference type="PDB" id="6BQF">
    <property type="method" value="X-ray"/>
    <property type="resolution" value="3.35 A"/>
    <property type="chains" value="H=1-146"/>
</dbReference>
<dbReference type="PDB" id="6CNB">
    <property type="method" value="EM"/>
    <property type="resolution" value="4.10 A"/>
    <property type="chains" value="H=1-146"/>
</dbReference>
<dbReference type="PDB" id="6CNC">
    <property type="method" value="EM"/>
    <property type="resolution" value="4.10 A"/>
    <property type="chains" value="H=1-146"/>
</dbReference>
<dbReference type="PDB" id="6CND">
    <property type="method" value="EM"/>
    <property type="resolution" value="4.80 A"/>
    <property type="chains" value="H=1-146"/>
</dbReference>
<dbReference type="PDB" id="6CNF">
    <property type="method" value="EM"/>
    <property type="resolution" value="4.50 A"/>
    <property type="chains" value="H=1-146"/>
</dbReference>
<dbReference type="PDB" id="6EU0">
    <property type="method" value="EM"/>
    <property type="resolution" value="4.00 A"/>
    <property type="chains" value="H=1-146"/>
</dbReference>
<dbReference type="PDB" id="6EU1">
    <property type="method" value="EM"/>
    <property type="resolution" value="3.40 A"/>
    <property type="chains" value="H=1-146"/>
</dbReference>
<dbReference type="PDB" id="6EU2">
    <property type="method" value="EM"/>
    <property type="resolution" value="3.40 A"/>
    <property type="chains" value="H=1-146"/>
</dbReference>
<dbReference type="PDB" id="6EU3">
    <property type="method" value="EM"/>
    <property type="resolution" value="3.30 A"/>
    <property type="chains" value="H=1-146"/>
</dbReference>
<dbReference type="PDB" id="6F40">
    <property type="method" value="EM"/>
    <property type="resolution" value="3.70 A"/>
    <property type="chains" value="H=1-146"/>
</dbReference>
<dbReference type="PDB" id="6F41">
    <property type="method" value="EM"/>
    <property type="resolution" value="4.30 A"/>
    <property type="chains" value="H=1-146"/>
</dbReference>
<dbReference type="PDB" id="6F42">
    <property type="method" value="EM"/>
    <property type="resolution" value="5.50 A"/>
    <property type="chains" value="H=1-146"/>
</dbReference>
<dbReference type="PDB" id="6F44">
    <property type="method" value="EM"/>
    <property type="resolution" value="4.20 A"/>
    <property type="chains" value="H=1-146"/>
</dbReference>
<dbReference type="PDB" id="6GYK">
    <property type="method" value="EM"/>
    <property type="resolution" value="5.10 A"/>
    <property type="chains" value="H=1-146"/>
</dbReference>
<dbReference type="PDB" id="6GYL">
    <property type="method" value="EM"/>
    <property type="resolution" value="4.80 A"/>
    <property type="chains" value="H=1-146"/>
</dbReference>
<dbReference type="PDB" id="6GYM">
    <property type="method" value="EM"/>
    <property type="resolution" value="6.70 A"/>
    <property type="chains" value="H=1-146"/>
</dbReference>
<dbReference type="PDB" id="6H67">
    <property type="method" value="EM"/>
    <property type="resolution" value="3.60 A"/>
    <property type="chains" value="H=1-146"/>
</dbReference>
<dbReference type="PDB" id="6H68">
    <property type="method" value="EM"/>
    <property type="resolution" value="4.60 A"/>
    <property type="chains" value="H=1-146"/>
</dbReference>
<dbReference type="PDB" id="6HKO">
    <property type="method" value="EM"/>
    <property type="resolution" value="3.42 A"/>
    <property type="chains" value="H=1-146"/>
</dbReference>
<dbReference type="PDB" id="6HLQ">
    <property type="method" value="EM"/>
    <property type="resolution" value="3.18 A"/>
    <property type="chains" value="H=1-146"/>
</dbReference>
<dbReference type="PDB" id="6HLR">
    <property type="method" value="EM"/>
    <property type="resolution" value="3.18 A"/>
    <property type="chains" value="H=1-146"/>
</dbReference>
<dbReference type="PDB" id="6HLS">
    <property type="method" value="EM"/>
    <property type="resolution" value="3.21 A"/>
    <property type="chains" value="H=1-146"/>
</dbReference>
<dbReference type="PDB" id="6I84">
    <property type="method" value="EM"/>
    <property type="resolution" value="4.40 A"/>
    <property type="chains" value="H=1-146"/>
</dbReference>
<dbReference type="PDB" id="6O6C">
    <property type="method" value="EM"/>
    <property type="resolution" value="3.10 A"/>
    <property type="chains" value="F=1-146"/>
</dbReference>
<dbReference type="PDB" id="6RQH">
    <property type="method" value="EM"/>
    <property type="resolution" value="3.70 A"/>
    <property type="chains" value="H=1-146"/>
</dbReference>
<dbReference type="PDB" id="6RQL">
    <property type="method" value="EM"/>
    <property type="resolution" value="2.90 A"/>
    <property type="chains" value="H=1-146"/>
</dbReference>
<dbReference type="PDB" id="6RQT">
    <property type="method" value="EM"/>
    <property type="resolution" value="4.00 A"/>
    <property type="chains" value="H=1-146"/>
</dbReference>
<dbReference type="PDB" id="6RRD">
    <property type="method" value="EM"/>
    <property type="resolution" value="3.10 A"/>
    <property type="chains" value="H=1-146"/>
</dbReference>
<dbReference type="PDB" id="6RUI">
    <property type="method" value="EM"/>
    <property type="resolution" value="2.70 A"/>
    <property type="chains" value="H=1-146"/>
</dbReference>
<dbReference type="PDB" id="6RUO">
    <property type="method" value="EM"/>
    <property type="resolution" value="3.50 A"/>
    <property type="chains" value="H=1-146"/>
</dbReference>
<dbReference type="PDB" id="6RWE">
    <property type="method" value="EM"/>
    <property type="resolution" value="3.00 A"/>
    <property type="chains" value="H=1-146"/>
</dbReference>
<dbReference type="PDB" id="6TPS">
    <property type="method" value="EM"/>
    <property type="resolution" value="3.54 A"/>
    <property type="chains" value="H=1-146"/>
</dbReference>
<dbReference type="PDB" id="6TUT">
    <property type="method" value="EM"/>
    <property type="resolution" value="3.25 A"/>
    <property type="chains" value="H=1-146"/>
</dbReference>
<dbReference type="PDB" id="6UPX">
    <property type="method" value="X-ray"/>
    <property type="resolution" value="3.40 A"/>
    <property type="chains" value="H=1-146"/>
</dbReference>
<dbReference type="PDB" id="6UPY">
    <property type="method" value="X-ray"/>
    <property type="resolution" value="3.40 A"/>
    <property type="chains" value="H=1-146"/>
</dbReference>
<dbReference type="PDB" id="6UPZ">
    <property type="method" value="X-ray"/>
    <property type="resolution" value="3.10 A"/>
    <property type="chains" value="H=1-146"/>
</dbReference>
<dbReference type="PDB" id="6UQ0">
    <property type="method" value="X-ray"/>
    <property type="resolution" value="3.56 A"/>
    <property type="chains" value="H=1-146"/>
</dbReference>
<dbReference type="PDB" id="6UQ1">
    <property type="method" value="X-ray"/>
    <property type="resolution" value="3.60 A"/>
    <property type="chains" value="H=1-146"/>
</dbReference>
<dbReference type="PDB" id="6UQ2">
    <property type="method" value="X-ray"/>
    <property type="resolution" value="3.20 A"/>
    <property type="chains" value="H=1-146"/>
</dbReference>
<dbReference type="PDB" id="6UQ3">
    <property type="method" value="X-ray"/>
    <property type="resolution" value="3.47 A"/>
    <property type="chains" value="H=1-146"/>
</dbReference>
<dbReference type="PDB" id="7KED">
    <property type="method" value="X-ray"/>
    <property type="resolution" value="3.60 A"/>
    <property type="chains" value="H=1-146"/>
</dbReference>
<dbReference type="PDB" id="7KEE">
    <property type="method" value="X-ray"/>
    <property type="resolution" value="3.45 A"/>
    <property type="chains" value="H=1-146"/>
</dbReference>
<dbReference type="PDB" id="7KEF">
    <property type="method" value="X-ray"/>
    <property type="resolution" value="3.89 A"/>
    <property type="chains" value="H=1-146"/>
</dbReference>
<dbReference type="PDB" id="7MEI">
    <property type="method" value="EM"/>
    <property type="resolution" value="3.54 A"/>
    <property type="chains" value="H/h=1-146"/>
</dbReference>
<dbReference type="PDB" id="7MK9">
    <property type="method" value="EM"/>
    <property type="resolution" value="3.54 A"/>
    <property type="chains" value="H=1-146"/>
</dbReference>
<dbReference type="PDB" id="7MKA">
    <property type="method" value="EM"/>
    <property type="resolution" value="3.54 A"/>
    <property type="chains" value="h=1-146"/>
</dbReference>
<dbReference type="PDB" id="7ML0">
    <property type="method" value="EM"/>
    <property type="resolution" value="3.00 A"/>
    <property type="chains" value="H=1-146"/>
</dbReference>
<dbReference type="PDB" id="7ML1">
    <property type="method" value="EM"/>
    <property type="resolution" value="4.00 A"/>
    <property type="chains" value="H=1-146"/>
</dbReference>
<dbReference type="PDB" id="7ML2">
    <property type="method" value="EM"/>
    <property type="resolution" value="3.40 A"/>
    <property type="chains" value="H=1-146"/>
</dbReference>
<dbReference type="PDB" id="7ML4">
    <property type="method" value="EM"/>
    <property type="resolution" value="3.10 A"/>
    <property type="chains" value="H=1-146"/>
</dbReference>
<dbReference type="PDB" id="7NKX">
    <property type="method" value="EM"/>
    <property type="resolution" value="2.90 A"/>
    <property type="chains" value="H=1-146"/>
</dbReference>
<dbReference type="PDB" id="7NKY">
    <property type="method" value="EM"/>
    <property type="resolution" value="3.20 A"/>
    <property type="chains" value="H=1-146"/>
</dbReference>
<dbReference type="PDB" id="7O4I">
    <property type="method" value="EM"/>
    <property type="resolution" value="3.20 A"/>
    <property type="chains" value="H=1-146"/>
</dbReference>
<dbReference type="PDB" id="7O4J">
    <property type="method" value="EM"/>
    <property type="resolution" value="2.90 A"/>
    <property type="chains" value="H=1-146"/>
</dbReference>
<dbReference type="PDB" id="7O72">
    <property type="method" value="EM"/>
    <property type="resolution" value="3.40 A"/>
    <property type="chains" value="H=1-146"/>
</dbReference>
<dbReference type="PDB" id="7O73">
    <property type="method" value="EM"/>
    <property type="resolution" value="3.40 A"/>
    <property type="chains" value="H=1-146"/>
</dbReference>
<dbReference type="PDB" id="7O75">
    <property type="method" value="EM"/>
    <property type="resolution" value="3.20 A"/>
    <property type="chains" value="H=1-146"/>
</dbReference>
<dbReference type="PDB" id="7RIM">
    <property type="method" value="X-ray"/>
    <property type="resolution" value="2.90 A"/>
    <property type="chains" value="H=1-146"/>
</dbReference>
<dbReference type="PDB" id="7RIP">
    <property type="method" value="X-ray"/>
    <property type="resolution" value="3.30 A"/>
    <property type="chains" value="H=1-146"/>
</dbReference>
<dbReference type="PDB" id="7RIQ">
    <property type="method" value="X-ray"/>
    <property type="resolution" value="3.00 A"/>
    <property type="chains" value="H=1-146"/>
</dbReference>
<dbReference type="PDB" id="7RIW">
    <property type="method" value="X-ray"/>
    <property type="resolution" value="3.20 A"/>
    <property type="chains" value="H=1-146"/>
</dbReference>
<dbReference type="PDB" id="7RIX">
    <property type="method" value="X-ray"/>
    <property type="resolution" value="3.40 A"/>
    <property type="chains" value="H=1-146"/>
</dbReference>
<dbReference type="PDB" id="7RIY">
    <property type="method" value="X-ray"/>
    <property type="resolution" value="3.70 A"/>
    <property type="chains" value="H=1-146"/>
</dbReference>
<dbReference type="PDB" id="7UI9">
    <property type="method" value="EM"/>
    <property type="resolution" value="3.30 A"/>
    <property type="chains" value="H=1-146"/>
</dbReference>
<dbReference type="PDB" id="7UIF">
    <property type="method" value="EM"/>
    <property type="resolution" value="4.60 A"/>
    <property type="chains" value="H=1-146"/>
</dbReference>
<dbReference type="PDB" id="7UIO">
    <property type="method" value="EM"/>
    <property type="resolution" value="3.30 A"/>
    <property type="chains" value="AH/BH=1-146"/>
</dbReference>
<dbReference type="PDB" id="7Z0H">
    <property type="method" value="EM"/>
    <property type="resolution" value="2.60 A"/>
    <property type="chains" value="H=1-146"/>
</dbReference>
<dbReference type="PDB" id="7Z1L">
    <property type="method" value="EM"/>
    <property type="resolution" value="2.80 A"/>
    <property type="chains" value="H=1-146"/>
</dbReference>
<dbReference type="PDB" id="7Z1M">
    <property type="method" value="EM"/>
    <property type="resolution" value="3.40 A"/>
    <property type="chains" value="H=1-146"/>
</dbReference>
<dbReference type="PDB" id="7Z1N">
    <property type="method" value="EM"/>
    <property type="resolution" value="3.90 A"/>
    <property type="chains" value="H=1-146"/>
</dbReference>
<dbReference type="PDB" id="7Z1O">
    <property type="method" value="EM"/>
    <property type="resolution" value="2.70 A"/>
    <property type="chains" value="H=1-146"/>
</dbReference>
<dbReference type="PDB" id="7Z2Z">
    <property type="method" value="EM"/>
    <property type="resolution" value="3.07 A"/>
    <property type="chains" value="H=1-146"/>
</dbReference>
<dbReference type="PDB" id="7Z30">
    <property type="method" value="EM"/>
    <property type="resolution" value="2.90 A"/>
    <property type="chains" value="H=1-146"/>
</dbReference>
<dbReference type="PDB" id="7Z31">
    <property type="method" value="EM"/>
    <property type="resolution" value="2.76 A"/>
    <property type="chains" value="H=1-146"/>
</dbReference>
<dbReference type="PDB" id="7ZS9">
    <property type="method" value="EM"/>
    <property type="resolution" value="3.10 A"/>
    <property type="chains" value="H=1-146"/>
</dbReference>
<dbReference type="PDB" id="7ZSA">
    <property type="method" value="EM"/>
    <property type="resolution" value="4.00 A"/>
    <property type="chains" value="H=1-146"/>
</dbReference>
<dbReference type="PDB" id="7ZSB">
    <property type="method" value="EM"/>
    <property type="resolution" value="6.60 A"/>
    <property type="chains" value="H=1-146"/>
</dbReference>
<dbReference type="PDB" id="8BWS">
    <property type="method" value="EM"/>
    <property type="resolution" value="3.20 A"/>
    <property type="chains" value="H=1-146"/>
</dbReference>
<dbReference type="PDB" id="8CEN">
    <property type="method" value="EM"/>
    <property type="resolution" value="3.00 A"/>
    <property type="chains" value="H=1-146"/>
</dbReference>
<dbReference type="PDB" id="8CEO">
    <property type="method" value="EM"/>
    <property type="resolution" value="3.60 A"/>
    <property type="chains" value="H=1-146"/>
</dbReference>
<dbReference type="PDB" id="8JCH">
    <property type="method" value="EM"/>
    <property type="resolution" value="2.70 A"/>
    <property type="chains" value="H=1-146"/>
</dbReference>
<dbReference type="PDB" id="8K5P">
    <property type="method" value="EM"/>
    <property type="resolution" value="2.80 A"/>
    <property type="chains" value="H=1-146"/>
</dbReference>
<dbReference type="PDB" id="8RAM">
    <property type="method" value="EM"/>
    <property type="resolution" value="2.80 A"/>
    <property type="chains" value="H=1-146"/>
</dbReference>
<dbReference type="PDB" id="8RAP">
    <property type="method" value="EM"/>
    <property type="resolution" value="4.30 A"/>
    <property type="chains" value="H=1-146"/>
</dbReference>
<dbReference type="PDB" id="8TUG">
    <property type="method" value="EM"/>
    <property type="resolution" value="3.50 A"/>
    <property type="chains" value="H=1-146"/>
</dbReference>
<dbReference type="PDB" id="8TVP">
    <property type="method" value="EM"/>
    <property type="resolution" value="3.70 A"/>
    <property type="chains" value="H=1-146"/>
</dbReference>
<dbReference type="PDB" id="8TVQ">
    <property type="method" value="EM"/>
    <property type="resolution" value="4.60 A"/>
    <property type="chains" value="H=1-146"/>
</dbReference>
<dbReference type="PDB" id="8TVS">
    <property type="method" value="EM"/>
    <property type="resolution" value="4.40 A"/>
    <property type="chains" value="H=1-146"/>
</dbReference>
<dbReference type="PDB" id="8TVV">
    <property type="method" value="EM"/>
    <property type="resolution" value="3.70 A"/>
    <property type="chains" value="H=1-146"/>
</dbReference>
<dbReference type="PDB" id="8TVW">
    <property type="method" value="EM"/>
    <property type="resolution" value="3.60 A"/>
    <property type="chains" value="H=1-146"/>
</dbReference>
<dbReference type="PDB" id="8TVX">
    <property type="method" value="EM"/>
    <property type="resolution" value="3.70 A"/>
    <property type="chains" value="H=1-146"/>
</dbReference>
<dbReference type="PDB" id="8TVY">
    <property type="method" value="EM"/>
    <property type="resolution" value="3.10 A"/>
    <property type="chains" value="H=1-146"/>
</dbReference>
<dbReference type="PDB" id="8UKQ">
    <property type="method" value="X-ray"/>
    <property type="resolution" value="3.50 A"/>
    <property type="chains" value="H=1-146"/>
</dbReference>
<dbReference type="PDB" id="8UKR">
    <property type="method" value="X-ray"/>
    <property type="resolution" value="3.78 A"/>
    <property type="chains" value="H=1-146"/>
</dbReference>
<dbReference type="PDB" id="8UKS">
    <property type="method" value="X-ray"/>
    <property type="resolution" value="3.40 A"/>
    <property type="chains" value="H=1-146"/>
</dbReference>
<dbReference type="PDB" id="8UKT">
    <property type="method" value="X-ray"/>
    <property type="resolution" value="3.60 A"/>
    <property type="chains" value="H=1-146"/>
</dbReference>
<dbReference type="PDB" id="8UKU">
    <property type="method" value="X-ray"/>
    <property type="resolution" value="3.60 A"/>
    <property type="chains" value="H=1-146"/>
</dbReference>
<dbReference type="PDB" id="8UMH">
    <property type="method" value="EM"/>
    <property type="resolution" value="4.10 A"/>
    <property type="chains" value="H=1-146"/>
</dbReference>
<dbReference type="PDB" id="8UMI">
    <property type="method" value="EM"/>
    <property type="resolution" value="3.70 A"/>
    <property type="chains" value="H=1-146"/>
</dbReference>
<dbReference type="PDB" id="8UOQ">
    <property type="method" value="EM"/>
    <property type="resolution" value="3.80 A"/>
    <property type="chains" value="H=1-146"/>
</dbReference>
<dbReference type="PDB" id="8UOT">
    <property type="method" value="EM"/>
    <property type="resolution" value="3.70 A"/>
    <property type="chains" value="H=1-146"/>
</dbReference>
<dbReference type="PDB" id="9BVT">
    <property type="method" value="X-ray"/>
    <property type="resolution" value="3.40 A"/>
    <property type="chains" value="H=1-146"/>
</dbReference>
<dbReference type="PDB" id="9BW0">
    <property type="method" value="X-ray"/>
    <property type="resolution" value="3.51 A"/>
    <property type="chains" value="H=1-146"/>
</dbReference>
<dbReference type="PDB" id="9JA1">
    <property type="method" value="EM"/>
    <property type="resolution" value="2.98 A"/>
    <property type="chains" value="H=1-146"/>
</dbReference>
<dbReference type="PDBsum" id="1A1D"/>
<dbReference type="PDBsum" id="1I3Q"/>
<dbReference type="PDBsum" id="1I50"/>
<dbReference type="PDBsum" id="1I6H"/>
<dbReference type="PDBsum" id="1K83"/>
<dbReference type="PDBsum" id="1NIK"/>
<dbReference type="PDBsum" id="1NT9"/>
<dbReference type="PDBsum" id="1PQV"/>
<dbReference type="PDBsum" id="1R5U"/>
<dbReference type="PDBsum" id="1R9S"/>
<dbReference type="PDBsum" id="1R9T"/>
<dbReference type="PDBsum" id="1SFO"/>
<dbReference type="PDBsum" id="1TWA"/>
<dbReference type="PDBsum" id="1TWC"/>
<dbReference type="PDBsum" id="1TWF"/>
<dbReference type="PDBsum" id="1TWG"/>
<dbReference type="PDBsum" id="1TWH"/>
<dbReference type="PDBsum" id="1WCM"/>
<dbReference type="PDBsum" id="1Y1V"/>
<dbReference type="PDBsum" id="1Y1W"/>
<dbReference type="PDBsum" id="1Y1Y"/>
<dbReference type="PDBsum" id="1Y77"/>
<dbReference type="PDBsum" id="2B63"/>
<dbReference type="PDBsum" id="2B8K"/>
<dbReference type="PDBsum" id="2E2H"/>
<dbReference type="PDBsum" id="2E2I"/>
<dbReference type="PDBsum" id="2E2J"/>
<dbReference type="PDBsum" id="2JA5"/>
<dbReference type="PDBsum" id="2JA6"/>
<dbReference type="PDBsum" id="2JA7"/>
<dbReference type="PDBsum" id="2JA8"/>
<dbReference type="PDBsum" id="2NVQ"/>
<dbReference type="PDBsum" id="2NVT"/>
<dbReference type="PDBsum" id="2NVX"/>
<dbReference type="PDBsum" id="2NVY"/>
<dbReference type="PDBsum" id="2NVZ"/>
<dbReference type="PDBsum" id="2R7Z"/>
<dbReference type="PDBsum" id="2R92"/>
<dbReference type="PDBsum" id="2R93"/>
<dbReference type="PDBsum" id="2VUM"/>
<dbReference type="PDBsum" id="2YU9"/>
<dbReference type="PDBsum" id="3CQZ"/>
<dbReference type="PDBsum" id="3FKI"/>
<dbReference type="PDBsum" id="3GTG"/>
<dbReference type="PDBsum" id="3GTJ"/>
<dbReference type="PDBsum" id="3GTK"/>
<dbReference type="PDBsum" id="3GTL"/>
<dbReference type="PDBsum" id="3GTM"/>
<dbReference type="PDBsum" id="3GTO"/>
<dbReference type="PDBsum" id="3GTP"/>
<dbReference type="PDBsum" id="3GTQ"/>
<dbReference type="PDBsum" id="3H3V"/>
<dbReference type="PDBsum" id="3HOU"/>
<dbReference type="PDBsum" id="3HOV"/>
<dbReference type="PDBsum" id="3HOW"/>
<dbReference type="PDBsum" id="3HOX"/>
<dbReference type="PDBsum" id="3HOY"/>
<dbReference type="PDBsum" id="3HOZ"/>
<dbReference type="PDBsum" id="3I4M"/>
<dbReference type="PDBsum" id="3I4N"/>
<dbReference type="PDBsum" id="3J0K"/>
<dbReference type="PDBsum" id="3J1N"/>
<dbReference type="PDBsum" id="3K1F"/>
<dbReference type="PDBsum" id="3K7A"/>
<dbReference type="PDBsum" id="3M3Y"/>
<dbReference type="PDBsum" id="3M4O"/>
<dbReference type="PDBsum" id="3PO2"/>
<dbReference type="PDBsum" id="3PO3"/>
<dbReference type="PDBsum" id="3QT1"/>
<dbReference type="PDBsum" id="3RZD"/>
<dbReference type="PDBsum" id="3RZO"/>
<dbReference type="PDBsum" id="3S14"/>
<dbReference type="PDBsum" id="3S15"/>
<dbReference type="PDBsum" id="3S16"/>
<dbReference type="PDBsum" id="3S17"/>
<dbReference type="PDBsum" id="3S1M"/>
<dbReference type="PDBsum" id="3S1N"/>
<dbReference type="PDBsum" id="3S1Q"/>
<dbReference type="PDBsum" id="3S1R"/>
<dbReference type="PDBsum" id="3S2D"/>
<dbReference type="PDBsum" id="3S2H"/>
<dbReference type="PDBsum" id="4A3B"/>
<dbReference type="PDBsum" id="4A3C"/>
<dbReference type="PDBsum" id="4A3D"/>
<dbReference type="PDBsum" id="4A3E"/>
<dbReference type="PDBsum" id="4A3F"/>
<dbReference type="PDBsum" id="4A3G"/>
<dbReference type="PDBsum" id="4A3I"/>
<dbReference type="PDBsum" id="4A3J"/>
<dbReference type="PDBsum" id="4A3K"/>
<dbReference type="PDBsum" id="4A3L"/>
<dbReference type="PDBsum" id="4A3M"/>
<dbReference type="PDBsum" id="4A93"/>
<dbReference type="PDBsum" id="4BBR"/>
<dbReference type="PDBsum" id="4BBS"/>
<dbReference type="PDBsum" id="4BXX"/>
<dbReference type="PDBsum" id="4BXZ"/>
<dbReference type="PDBsum" id="4BY1"/>
<dbReference type="PDBsum" id="4BY7"/>
<dbReference type="PDBsum" id="4C2M"/>
<dbReference type="PDBsum" id="4C3H"/>
<dbReference type="PDBsum" id="4C3I"/>
<dbReference type="PDBsum" id="4C3J"/>
<dbReference type="PDBsum" id="4V1M"/>
<dbReference type="PDBsum" id="4V1N"/>
<dbReference type="PDBsum" id="4V1O"/>
<dbReference type="PDBsum" id="4X67"/>
<dbReference type="PDBsum" id="4X6A"/>
<dbReference type="PDBsum" id="4Y52"/>
<dbReference type="PDBsum" id="4Y7N"/>
<dbReference type="PDBsum" id="4YM7"/>
<dbReference type="PDBsum" id="5C3E"/>
<dbReference type="PDBsum" id="5C44"/>
<dbReference type="PDBsum" id="5C4A"/>
<dbReference type="PDBsum" id="5C4J"/>
<dbReference type="PDBsum" id="5C4X"/>
<dbReference type="PDBsum" id="5FJ8"/>
<dbReference type="PDBsum" id="5FJ9"/>
<dbReference type="PDBsum" id="5FJA"/>
<dbReference type="PDBsum" id="5FMF"/>
<dbReference type="PDBsum" id="5FYW"/>
<dbReference type="PDBsum" id="5FZ5"/>
<dbReference type="PDBsum" id="5G5L"/>
<dbReference type="PDBsum" id="5IP7"/>
<dbReference type="PDBsum" id="5IP9"/>
<dbReference type="PDBsum" id="5LMX"/>
<dbReference type="PDBsum" id="5M3F"/>
<dbReference type="PDBsum" id="5M3M"/>
<dbReference type="PDBsum" id="5M5W"/>
<dbReference type="PDBsum" id="5M5X"/>
<dbReference type="PDBsum" id="5M5Y"/>
<dbReference type="PDBsum" id="5M64"/>
<dbReference type="PDBsum" id="5N5Y"/>
<dbReference type="PDBsum" id="5N5Z"/>
<dbReference type="PDBsum" id="5N60"/>
<dbReference type="PDBsum" id="5N61"/>
<dbReference type="PDBsum" id="5OA1"/>
<dbReference type="PDBsum" id="5OQJ"/>
<dbReference type="PDBsum" id="5OQM"/>
<dbReference type="PDBsum" id="5OT2"/>
<dbReference type="PDBsum" id="5SVA"/>
<dbReference type="PDBsum" id="5U5Q"/>
<dbReference type="PDBsum" id="5VVR"/>
<dbReference type="PDBsum" id="5VVS"/>
<dbReference type="PDBsum" id="5W4U"/>
<dbReference type="PDBsum" id="5W51"/>
<dbReference type="PDBsum" id="5W5Y"/>
<dbReference type="PDBsum" id="5W64"/>
<dbReference type="PDBsum" id="5W65"/>
<dbReference type="PDBsum" id="5W66"/>
<dbReference type="PDBsum" id="6BLO"/>
<dbReference type="PDBsum" id="6BLP"/>
<dbReference type="PDBsum" id="6BM2"/>
<dbReference type="PDBsum" id="6BM4"/>
<dbReference type="PDBsum" id="6BQF"/>
<dbReference type="PDBsum" id="6CNB"/>
<dbReference type="PDBsum" id="6CNC"/>
<dbReference type="PDBsum" id="6CND"/>
<dbReference type="PDBsum" id="6CNF"/>
<dbReference type="PDBsum" id="6EU0"/>
<dbReference type="PDBsum" id="6EU1"/>
<dbReference type="PDBsum" id="6EU2"/>
<dbReference type="PDBsum" id="6EU3"/>
<dbReference type="PDBsum" id="6F40"/>
<dbReference type="PDBsum" id="6F41"/>
<dbReference type="PDBsum" id="6F42"/>
<dbReference type="PDBsum" id="6F44"/>
<dbReference type="PDBsum" id="6GYK"/>
<dbReference type="PDBsum" id="6GYL"/>
<dbReference type="PDBsum" id="6GYM"/>
<dbReference type="PDBsum" id="6H67"/>
<dbReference type="PDBsum" id="6H68"/>
<dbReference type="PDBsum" id="6HKO"/>
<dbReference type="PDBsum" id="6HLQ"/>
<dbReference type="PDBsum" id="6HLR"/>
<dbReference type="PDBsum" id="6HLS"/>
<dbReference type="PDBsum" id="6I84"/>
<dbReference type="PDBsum" id="6O6C"/>
<dbReference type="PDBsum" id="6RQH"/>
<dbReference type="PDBsum" id="6RQL"/>
<dbReference type="PDBsum" id="6RQT"/>
<dbReference type="PDBsum" id="6RRD"/>
<dbReference type="PDBsum" id="6RUI"/>
<dbReference type="PDBsum" id="6RUO"/>
<dbReference type="PDBsum" id="6RWE"/>
<dbReference type="PDBsum" id="6TPS"/>
<dbReference type="PDBsum" id="6TUT"/>
<dbReference type="PDBsum" id="6UPX"/>
<dbReference type="PDBsum" id="6UPY"/>
<dbReference type="PDBsum" id="6UPZ"/>
<dbReference type="PDBsum" id="6UQ0"/>
<dbReference type="PDBsum" id="6UQ1"/>
<dbReference type="PDBsum" id="6UQ2"/>
<dbReference type="PDBsum" id="6UQ3"/>
<dbReference type="PDBsum" id="7KED"/>
<dbReference type="PDBsum" id="7KEE"/>
<dbReference type="PDBsum" id="7KEF"/>
<dbReference type="PDBsum" id="7MEI"/>
<dbReference type="PDBsum" id="7MK9"/>
<dbReference type="PDBsum" id="7MKA"/>
<dbReference type="PDBsum" id="7ML0"/>
<dbReference type="PDBsum" id="7ML1"/>
<dbReference type="PDBsum" id="7ML2"/>
<dbReference type="PDBsum" id="7ML4"/>
<dbReference type="PDBsum" id="7NKX"/>
<dbReference type="PDBsum" id="7NKY"/>
<dbReference type="PDBsum" id="7O4I"/>
<dbReference type="PDBsum" id="7O4J"/>
<dbReference type="PDBsum" id="7O72"/>
<dbReference type="PDBsum" id="7O73"/>
<dbReference type="PDBsum" id="7O75"/>
<dbReference type="PDBsum" id="7RIM"/>
<dbReference type="PDBsum" id="7RIP"/>
<dbReference type="PDBsum" id="7RIQ"/>
<dbReference type="PDBsum" id="7RIW"/>
<dbReference type="PDBsum" id="7RIX"/>
<dbReference type="PDBsum" id="7RIY"/>
<dbReference type="PDBsum" id="7UI9"/>
<dbReference type="PDBsum" id="7UIF"/>
<dbReference type="PDBsum" id="7UIO"/>
<dbReference type="PDBsum" id="7Z0H"/>
<dbReference type="PDBsum" id="7Z1L"/>
<dbReference type="PDBsum" id="7Z1M"/>
<dbReference type="PDBsum" id="7Z1N"/>
<dbReference type="PDBsum" id="7Z1O"/>
<dbReference type="PDBsum" id="7Z2Z"/>
<dbReference type="PDBsum" id="7Z30"/>
<dbReference type="PDBsum" id="7Z31"/>
<dbReference type="PDBsum" id="7ZS9"/>
<dbReference type="PDBsum" id="7ZSA"/>
<dbReference type="PDBsum" id="7ZSB"/>
<dbReference type="PDBsum" id="8BWS"/>
<dbReference type="PDBsum" id="8CEN"/>
<dbReference type="PDBsum" id="8CEO"/>
<dbReference type="PDBsum" id="8JCH"/>
<dbReference type="PDBsum" id="8K5P"/>
<dbReference type="PDBsum" id="8RAM"/>
<dbReference type="PDBsum" id="8RAP"/>
<dbReference type="PDBsum" id="8TUG"/>
<dbReference type="PDBsum" id="8TVP"/>
<dbReference type="PDBsum" id="8TVQ"/>
<dbReference type="PDBsum" id="8TVS"/>
<dbReference type="PDBsum" id="8TVV"/>
<dbReference type="PDBsum" id="8TVW"/>
<dbReference type="PDBsum" id="8TVX"/>
<dbReference type="PDBsum" id="8TVY"/>
<dbReference type="PDBsum" id="8UKQ"/>
<dbReference type="PDBsum" id="8UKR"/>
<dbReference type="PDBsum" id="8UKS"/>
<dbReference type="PDBsum" id="8UKT"/>
<dbReference type="PDBsum" id="8UKU"/>
<dbReference type="PDBsum" id="8UMH"/>
<dbReference type="PDBsum" id="8UMI"/>
<dbReference type="PDBsum" id="8UOQ"/>
<dbReference type="PDBsum" id="8UOT"/>
<dbReference type="PDBsum" id="9BVT"/>
<dbReference type="PDBsum" id="9BW0"/>
<dbReference type="PDBsum" id="9JA1"/>
<dbReference type="EMDB" id="EMD-0090"/>
<dbReference type="EMDB" id="EMD-0091"/>
<dbReference type="EMDB" id="EMD-0092"/>
<dbReference type="EMDB" id="EMD-0146"/>
<dbReference type="EMDB" id="EMD-0147"/>
<dbReference type="EMDB" id="EMD-0238"/>
<dbReference type="EMDB" id="EMD-0239"/>
<dbReference type="EMDB" id="EMD-0240"/>
<dbReference type="EMDB" id="EMD-0241"/>
<dbReference type="EMDB" id="EMD-0633"/>
<dbReference type="EMDB" id="EMD-10006"/>
<dbReference type="EMDB" id="EMD-10007"/>
<dbReference type="EMDB" id="EMD-10038"/>
<dbReference type="EMDB" id="EMD-10544"/>
<dbReference type="EMDB" id="EMD-10595"/>
<dbReference type="EMDB" id="EMD-12449"/>
<dbReference type="EMDB" id="EMD-12450"/>
<dbReference type="EMDB" id="EMD-12719"/>
<dbReference type="EMDB" id="EMD-12720"/>
<dbReference type="EMDB" id="EMD-12743"/>
<dbReference type="EMDB" id="EMD-12744"/>
<dbReference type="EMDB" id="EMD-12745"/>
<dbReference type="EMDB" id="EMD-14421"/>
<dbReference type="EMDB" id="EMD-14447"/>
<dbReference type="EMDB" id="EMD-14448"/>
<dbReference type="EMDB" id="EMD-14449"/>
<dbReference type="EMDB" id="EMD-14451"/>
<dbReference type="EMDB" id="EMD-14468"/>
<dbReference type="EMDB" id="EMD-14469"/>
<dbReference type="EMDB" id="EMD-14470"/>
<dbReference type="EMDB" id="EMD-14927"/>
<dbReference type="EMDB" id="EMD-14928"/>
<dbReference type="EMDB" id="EMD-14929"/>
<dbReference type="EMDB" id="EMD-16299"/>
<dbReference type="EMDB" id="EMD-16610"/>
<dbReference type="EMDB" id="EMD-16611"/>
<dbReference type="EMDB" id="EMD-19019"/>
<dbReference type="EMDB" id="EMD-19022"/>
<dbReference type="EMDB" id="EMD-26542"/>
<dbReference type="EMDB" id="EMD-26544"/>
<dbReference type="EMDB" id="EMD-26551"/>
<dbReference type="EMDB" id="EMD-2784"/>
<dbReference type="EMDB" id="EMD-2785"/>
<dbReference type="EMDB" id="EMD-2786"/>
<dbReference type="EMDB" id="EMD-3446"/>
<dbReference type="EMDB" id="EMD-3447"/>
<dbReference type="EMDB" id="EMD-3448"/>
<dbReference type="EMDB" id="EMD-3449"/>
<dbReference type="EMDB" id="EMD-3590"/>
<dbReference type="EMDB" id="EMD-3591"/>
<dbReference type="EMDB" id="EMD-3592"/>
<dbReference type="EMDB" id="EMD-3593"/>
<dbReference type="EMDB" id="EMD-36162"/>
<dbReference type="EMDB" id="EMD-36908"/>
<dbReference type="EMDB" id="EMD-3727"/>
<dbReference type="EMDB" id="EMD-3846"/>
<dbReference type="EMDB" id="EMD-3850"/>
<dbReference type="EMDB" id="EMD-3955"/>
<dbReference type="EMDB" id="EMD-3956"/>
<dbReference type="EMDB" id="EMD-3957"/>
<dbReference type="EMDB" id="EMD-3958"/>
<dbReference type="EMDB" id="EMD-4088"/>
<dbReference type="EMDB" id="EMD-4147"/>
<dbReference type="EMDB" id="EMD-4148"/>
<dbReference type="EMDB" id="EMD-4180"/>
<dbReference type="EMDB" id="EMD-4181"/>
<dbReference type="EMDB" id="EMD-4182"/>
<dbReference type="EMDB" id="EMD-4183"/>
<dbReference type="EMDB" id="EMD-42437"/>
<dbReference type="EMDB" id="EMD-42438"/>
<dbReference type="EMDB" id="EMD-4429"/>
<dbReference type="EMDB" id="EMD-4982"/>
<dbReference type="EMDB" id="EMD-4984"/>
<dbReference type="EMDB" id="EMD-4985"/>
<dbReference type="EMDB" id="EMD-4987"/>
<dbReference type="EMDB" id="EMD-61287"/>
<dbReference type="EMDB" id="EMD-7530"/>
<dbReference type="EMDB" id="EMD-7531"/>
<dbReference type="EMDB" id="EMD-7532"/>
<dbReference type="EMDB" id="EMD-7533"/>
<dbReference type="EMDB" id="EMD-8305"/>
<dbReference type="EMDB" id="EMD-8735"/>
<dbReference type="EMDB" id="EMD-8737"/>
<dbReference type="EMDB" id="EMD-8771"/>
<dbReference type="EMDB" id="EMD-8773"/>
<dbReference type="EMDB" id="EMD-8774"/>
<dbReference type="EMDB" id="EMD-8775"/>
<dbReference type="EMDB" id="EMD-8776"/>
<dbReference type="EMDB" id="EMD-8777"/>
<dbReference type="SMR" id="P20436"/>
<dbReference type="BioGRID" id="34618">
    <property type="interactions" value="252"/>
</dbReference>
<dbReference type="ComplexPortal" id="CPX-1664">
    <property type="entry name" value="DNA-directed RNA Polymerase I complex"/>
</dbReference>
<dbReference type="ComplexPortal" id="CPX-2660">
    <property type="entry name" value="DNA-directed RNA polymerase III complex"/>
</dbReference>
<dbReference type="ComplexPortal" id="CPX-2662">
    <property type="entry name" value="DNA-directed RNA polymerase II complex"/>
</dbReference>
<dbReference type="DIP" id="DIP-2195N"/>
<dbReference type="FunCoup" id="P20436">
    <property type="interactions" value="991"/>
</dbReference>
<dbReference type="IntAct" id="P20436">
    <property type="interactions" value="49"/>
</dbReference>
<dbReference type="MINT" id="P20436"/>
<dbReference type="STRING" id="4932.YOR224C"/>
<dbReference type="iPTMnet" id="P20436"/>
<dbReference type="PaxDb" id="4932-YOR224C"/>
<dbReference type="PeptideAtlas" id="P20436"/>
<dbReference type="EnsemblFungi" id="YOR224C_mRNA">
    <property type="protein sequence ID" value="YOR224C"/>
    <property type="gene ID" value="YOR224C"/>
</dbReference>
<dbReference type="GeneID" id="854399"/>
<dbReference type="KEGG" id="sce:YOR224C"/>
<dbReference type="AGR" id="SGD:S000005750"/>
<dbReference type="SGD" id="S000005750">
    <property type="gene designation" value="RPB8"/>
</dbReference>
<dbReference type="VEuPathDB" id="FungiDB:YOR224C"/>
<dbReference type="eggNOG" id="KOG3400">
    <property type="taxonomic scope" value="Eukaryota"/>
</dbReference>
<dbReference type="GeneTree" id="ENSGT00390000018195"/>
<dbReference type="HOGENOM" id="CLU_103864_1_0_1"/>
<dbReference type="InParanoid" id="P20436"/>
<dbReference type="OMA" id="KEDDKGW"/>
<dbReference type="OrthoDB" id="20018at2759"/>
<dbReference type="BioCyc" id="YEAST:G3O-33723-MONOMER"/>
<dbReference type="Reactome" id="R-SCE-113418">
    <property type="pathway name" value="Formation of the Early Elongation Complex"/>
</dbReference>
<dbReference type="Reactome" id="R-SCE-674695">
    <property type="pathway name" value="RNA Polymerase II Pre-transcription Events"/>
</dbReference>
<dbReference type="Reactome" id="R-SCE-6781823">
    <property type="pathway name" value="Formation of TC-NER Pre-Incision Complex"/>
</dbReference>
<dbReference type="Reactome" id="R-SCE-6782135">
    <property type="pathway name" value="Dual incision in TC-NER"/>
</dbReference>
<dbReference type="Reactome" id="R-SCE-6782210">
    <property type="pathway name" value="Gap-filling DNA repair synthesis and ligation in TC-NER"/>
</dbReference>
<dbReference type="Reactome" id="R-SCE-6796648">
    <property type="pathway name" value="TP53 Regulates Transcription of DNA Repair Genes"/>
</dbReference>
<dbReference type="Reactome" id="R-SCE-6807505">
    <property type="pathway name" value="RNA polymerase II transcribes snRNA genes"/>
</dbReference>
<dbReference type="Reactome" id="R-SCE-72086">
    <property type="pathway name" value="mRNA Capping"/>
</dbReference>
<dbReference type="Reactome" id="R-SCE-72203">
    <property type="pathway name" value="Processing of Capped Intron-Containing Pre-mRNA"/>
</dbReference>
<dbReference type="Reactome" id="R-SCE-73762">
    <property type="pathway name" value="RNA Polymerase I Transcription Initiation"/>
</dbReference>
<dbReference type="Reactome" id="R-SCE-73772">
    <property type="pathway name" value="RNA Polymerase I Promoter Escape"/>
</dbReference>
<dbReference type="Reactome" id="R-SCE-73776">
    <property type="pathway name" value="RNA Polymerase II Promoter Escape"/>
</dbReference>
<dbReference type="Reactome" id="R-SCE-73779">
    <property type="pathway name" value="RNA Polymerase II Transcription Pre-Initiation And Promoter Opening"/>
</dbReference>
<dbReference type="Reactome" id="R-SCE-75953">
    <property type="pathway name" value="RNA Polymerase II Transcription Initiation"/>
</dbReference>
<dbReference type="Reactome" id="R-SCE-76042">
    <property type="pathway name" value="RNA Polymerase II Transcription Initiation And Promoter Clearance"/>
</dbReference>
<dbReference type="Reactome" id="R-SCE-76066">
    <property type="pathway name" value="RNA Polymerase III Transcription Initiation From Type 2 Promoter"/>
</dbReference>
<dbReference type="Reactome" id="R-SCE-77075">
    <property type="pathway name" value="RNA Pol II CTD phosphorylation and interaction with CE"/>
</dbReference>
<dbReference type="Reactome" id="R-SCE-9018519">
    <property type="pathway name" value="Estrogen-dependent gene expression"/>
</dbReference>
<dbReference type="BioGRID-ORCS" id="854399">
    <property type="hits" value="10 hits in 10 CRISPR screens"/>
</dbReference>
<dbReference type="CD-CODE" id="BDAE0F88">
    <property type="entry name" value="Nucleolus"/>
</dbReference>
<dbReference type="EvolutionaryTrace" id="P20436"/>
<dbReference type="PRO" id="PR:P20436"/>
<dbReference type="Proteomes" id="UP000002311">
    <property type="component" value="Chromosome XV"/>
</dbReference>
<dbReference type="RNAct" id="P20436">
    <property type="molecule type" value="protein"/>
</dbReference>
<dbReference type="GO" id="GO:0005654">
    <property type="term" value="C:nucleoplasm"/>
    <property type="evidence" value="ECO:0000304"/>
    <property type="project" value="Reactome"/>
</dbReference>
<dbReference type="GO" id="GO:0005634">
    <property type="term" value="C:nucleus"/>
    <property type="evidence" value="ECO:0000314"/>
    <property type="project" value="ComplexPortal"/>
</dbReference>
<dbReference type="GO" id="GO:0005736">
    <property type="term" value="C:RNA polymerase I complex"/>
    <property type="evidence" value="ECO:0000314"/>
    <property type="project" value="UniProtKB"/>
</dbReference>
<dbReference type="GO" id="GO:0005665">
    <property type="term" value="C:RNA polymerase II, core complex"/>
    <property type="evidence" value="ECO:0000314"/>
    <property type="project" value="SGD"/>
</dbReference>
<dbReference type="GO" id="GO:0005666">
    <property type="term" value="C:RNA polymerase III complex"/>
    <property type="evidence" value="ECO:0000314"/>
    <property type="project" value="SGD"/>
</dbReference>
<dbReference type="GO" id="GO:0003677">
    <property type="term" value="F:DNA binding"/>
    <property type="evidence" value="ECO:0007669"/>
    <property type="project" value="UniProtKB-KW"/>
</dbReference>
<dbReference type="GO" id="GO:0003899">
    <property type="term" value="F:DNA-directed RNA polymerase activity"/>
    <property type="evidence" value="ECO:0000314"/>
    <property type="project" value="UniProtKB"/>
</dbReference>
<dbReference type="GO" id="GO:0042790">
    <property type="term" value="P:nucleolar large rRNA transcription by RNA polymerase I"/>
    <property type="evidence" value="ECO:0000314"/>
    <property type="project" value="ComplexPortal"/>
</dbReference>
<dbReference type="GO" id="GO:0042254">
    <property type="term" value="P:ribosome biogenesis"/>
    <property type="evidence" value="ECO:0007669"/>
    <property type="project" value="UniProtKB-KW"/>
</dbReference>
<dbReference type="GO" id="GO:0001172">
    <property type="term" value="P:RNA-templated transcription"/>
    <property type="evidence" value="ECO:0007669"/>
    <property type="project" value="GOC"/>
</dbReference>
<dbReference type="GO" id="GO:0006363">
    <property type="term" value="P:termination of RNA polymerase I transcription"/>
    <property type="evidence" value="ECO:0000314"/>
    <property type="project" value="ComplexPortal"/>
</dbReference>
<dbReference type="GO" id="GO:0006386">
    <property type="term" value="P:termination of RNA polymerase III transcription"/>
    <property type="evidence" value="ECO:0000314"/>
    <property type="project" value="ComplexPortal"/>
</dbReference>
<dbReference type="GO" id="GO:0006360">
    <property type="term" value="P:transcription by RNA polymerase I"/>
    <property type="evidence" value="ECO:0000314"/>
    <property type="project" value="UniProtKB"/>
</dbReference>
<dbReference type="GO" id="GO:0006366">
    <property type="term" value="P:transcription by RNA polymerase II"/>
    <property type="evidence" value="ECO:0000353"/>
    <property type="project" value="SGD"/>
</dbReference>
<dbReference type="GO" id="GO:0006383">
    <property type="term" value="P:transcription by RNA polymerase III"/>
    <property type="evidence" value="ECO:0000314"/>
    <property type="project" value="ComplexPortal"/>
</dbReference>
<dbReference type="GO" id="GO:0006362">
    <property type="term" value="P:transcription elongation by RNA polymerase I"/>
    <property type="evidence" value="ECO:0000314"/>
    <property type="project" value="ComplexPortal"/>
</dbReference>
<dbReference type="GO" id="GO:0006368">
    <property type="term" value="P:transcription elongation by RNA polymerase II"/>
    <property type="evidence" value="ECO:0000314"/>
    <property type="project" value="ComplexPortal"/>
</dbReference>
<dbReference type="GO" id="GO:0006361">
    <property type="term" value="P:transcription initiation at RNA polymerase I promoter"/>
    <property type="evidence" value="ECO:0000314"/>
    <property type="project" value="ComplexPortal"/>
</dbReference>
<dbReference type="GO" id="GO:0006367">
    <property type="term" value="P:transcription initiation at RNA polymerase II promoter"/>
    <property type="evidence" value="ECO:0000314"/>
    <property type="project" value="ComplexPortal"/>
</dbReference>
<dbReference type="GO" id="GO:0006384">
    <property type="term" value="P:transcription initiation at RNA polymerase III promoter"/>
    <property type="evidence" value="ECO:0000314"/>
    <property type="project" value="ComplexPortal"/>
</dbReference>
<dbReference type="GO" id="GO:0042797">
    <property type="term" value="P:tRNA transcription by RNA polymerase III"/>
    <property type="evidence" value="ECO:0000314"/>
    <property type="project" value="SGD"/>
</dbReference>
<dbReference type="FunFam" id="2.40.50.140:FF:000191">
    <property type="entry name" value="DNA-directed RNA polymerases I, II, and III subunit RPABC3"/>
    <property type="match status" value="1"/>
</dbReference>
<dbReference type="Gene3D" id="2.40.50.140">
    <property type="entry name" value="Nucleic acid-binding proteins"/>
    <property type="match status" value="1"/>
</dbReference>
<dbReference type="InterPro" id="IPR012340">
    <property type="entry name" value="NA-bd_OB-fold"/>
</dbReference>
<dbReference type="InterPro" id="IPR005570">
    <property type="entry name" value="RPABC3"/>
</dbReference>
<dbReference type="PANTHER" id="PTHR10917">
    <property type="entry name" value="DNA-DIRECTED RNA POLYMERASES I, II, AND III SUBUNIT RPABC3"/>
    <property type="match status" value="1"/>
</dbReference>
<dbReference type="PANTHER" id="PTHR10917:SF0">
    <property type="entry name" value="DNA-DIRECTED RNA POLYMERASES I, II, AND III SUBUNIT RPABC3"/>
    <property type="match status" value="1"/>
</dbReference>
<dbReference type="Pfam" id="PF03870">
    <property type="entry name" value="RNA_pol_Rpb8"/>
    <property type="match status" value="1"/>
</dbReference>
<dbReference type="PIRSF" id="PIRSF000779">
    <property type="entry name" value="RNA_pol_Rpb8"/>
    <property type="match status" value="1"/>
</dbReference>
<dbReference type="SMART" id="SM00658">
    <property type="entry name" value="RPOL8c"/>
    <property type="match status" value="1"/>
</dbReference>
<dbReference type="SUPFAM" id="SSF50249">
    <property type="entry name" value="Nucleic acid-binding proteins"/>
    <property type="match status" value="1"/>
</dbReference>
<reference key="1">
    <citation type="journal article" date="1990" name="Genes Dev.">
        <title>Subunits shared by eukaryotic nuclear RNA polymerases.</title>
        <authorList>
            <person name="Woychik N.A."/>
            <person name="Liao S.-M."/>
            <person name="Kolodziej P.A."/>
            <person name="Young R.A."/>
        </authorList>
    </citation>
    <scope>NUCLEOTIDE SEQUENCE [GENOMIC DNA]</scope>
</reference>
<reference key="2">
    <citation type="journal article" date="1996" name="Yeast">
        <title>Sequence and analysis of a 33 kb fragment from the right arm of chromosome XV of the yeast Saccharomyces cerevisiae.</title>
        <authorList>
            <person name="Galisson F."/>
            <person name="Dujon B."/>
        </authorList>
    </citation>
    <scope>NUCLEOTIDE SEQUENCE [GENOMIC DNA]</scope>
    <source>
        <strain>ATCC 96604 / S288c / FY1679</strain>
    </source>
</reference>
<reference key="3">
    <citation type="journal article" date="1997" name="Nature">
        <title>The nucleotide sequence of Saccharomyces cerevisiae chromosome XV.</title>
        <authorList>
            <person name="Dujon B."/>
            <person name="Albermann K."/>
            <person name="Aldea M."/>
            <person name="Alexandraki D."/>
            <person name="Ansorge W."/>
            <person name="Arino J."/>
            <person name="Benes V."/>
            <person name="Bohn C."/>
            <person name="Bolotin-Fukuhara M."/>
            <person name="Bordonne R."/>
            <person name="Boyer J."/>
            <person name="Camasses A."/>
            <person name="Casamayor A."/>
            <person name="Casas C."/>
            <person name="Cheret G."/>
            <person name="Cziepluch C."/>
            <person name="Daignan-Fornier B."/>
            <person name="Dang V.-D."/>
            <person name="de Haan M."/>
            <person name="Delius H."/>
            <person name="Durand P."/>
            <person name="Fairhead C."/>
            <person name="Feldmann H."/>
            <person name="Gaillon L."/>
            <person name="Galisson F."/>
            <person name="Gamo F.-J."/>
            <person name="Gancedo C."/>
            <person name="Goffeau A."/>
            <person name="Goulding S.E."/>
            <person name="Grivell L.A."/>
            <person name="Habbig B."/>
            <person name="Hand N.J."/>
            <person name="Hani J."/>
            <person name="Hattenhorst U."/>
            <person name="Hebling U."/>
            <person name="Hernando Y."/>
            <person name="Herrero E."/>
            <person name="Heumann K."/>
            <person name="Hiesel R."/>
            <person name="Hilger F."/>
            <person name="Hofmann B."/>
            <person name="Hollenberg C.P."/>
            <person name="Hughes B."/>
            <person name="Jauniaux J.-C."/>
            <person name="Kalogeropoulos A."/>
            <person name="Katsoulou C."/>
            <person name="Kordes E."/>
            <person name="Lafuente M.J."/>
            <person name="Landt O."/>
            <person name="Louis E.J."/>
            <person name="Maarse A.C."/>
            <person name="Madania A."/>
            <person name="Mannhaupt G."/>
            <person name="Marck C."/>
            <person name="Martin R.P."/>
            <person name="Mewes H.-W."/>
            <person name="Michaux G."/>
            <person name="Paces V."/>
            <person name="Parle-McDermott A.G."/>
            <person name="Pearson B.M."/>
            <person name="Perrin A."/>
            <person name="Pettersson B."/>
            <person name="Poch O."/>
            <person name="Pohl T.M."/>
            <person name="Poirey R."/>
            <person name="Portetelle D."/>
            <person name="Pujol A."/>
            <person name="Purnelle B."/>
            <person name="Ramezani Rad M."/>
            <person name="Rechmann S."/>
            <person name="Schwager C."/>
            <person name="Schweizer M."/>
            <person name="Sor F."/>
            <person name="Sterky F."/>
            <person name="Tarassov I.A."/>
            <person name="Teodoru C."/>
            <person name="Tettelin H."/>
            <person name="Thierry A."/>
            <person name="Tobiasch E."/>
            <person name="Tzermia M."/>
            <person name="Uhlen M."/>
            <person name="Unseld M."/>
            <person name="Valens M."/>
            <person name="Vandenbol M."/>
            <person name="Vetter I."/>
            <person name="Vlcek C."/>
            <person name="Voet M."/>
            <person name="Volckaert G."/>
            <person name="Voss H."/>
            <person name="Wambutt R."/>
            <person name="Wedler H."/>
            <person name="Wiemann S."/>
            <person name="Winsor B."/>
            <person name="Wolfe K.H."/>
            <person name="Zollner A."/>
            <person name="Zumstein E."/>
            <person name="Kleine K."/>
        </authorList>
    </citation>
    <scope>NUCLEOTIDE SEQUENCE [LARGE SCALE GENOMIC DNA]</scope>
    <source>
        <strain>ATCC 204508 / S288c</strain>
    </source>
</reference>
<reference key="4">
    <citation type="journal article" date="2014" name="G3 (Bethesda)">
        <title>The reference genome sequence of Saccharomyces cerevisiae: Then and now.</title>
        <authorList>
            <person name="Engel S.R."/>
            <person name="Dietrich F.S."/>
            <person name="Fisk D.G."/>
            <person name="Binkley G."/>
            <person name="Balakrishnan R."/>
            <person name="Costanzo M.C."/>
            <person name="Dwight S.S."/>
            <person name="Hitz B.C."/>
            <person name="Karra K."/>
            <person name="Nash R.S."/>
            <person name="Weng S."/>
            <person name="Wong E.D."/>
            <person name="Lloyd P."/>
            <person name="Skrzypek M.S."/>
            <person name="Miyasato S.R."/>
            <person name="Simison M."/>
            <person name="Cherry J.M."/>
        </authorList>
    </citation>
    <scope>GENOME REANNOTATION</scope>
    <source>
        <strain>ATCC 204508 / S288c</strain>
    </source>
</reference>
<reference key="5">
    <citation type="journal article" date="2007" name="Genome Res.">
        <title>Approaching a complete repository of sequence-verified protein-encoding clones for Saccharomyces cerevisiae.</title>
        <authorList>
            <person name="Hu Y."/>
            <person name="Rolfs A."/>
            <person name="Bhullar B."/>
            <person name="Murthy T.V.S."/>
            <person name="Zhu C."/>
            <person name="Berger M.F."/>
            <person name="Camargo A.A."/>
            <person name="Kelley F."/>
            <person name="McCarron S."/>
            <person name="Jepson D."/>
            <person name="Richardson A."/>
            <person name="Raphael J."/>
            <person name="Moreira D."/>
            <person name="Taycher E."/>
            <person name="Zuo D."/>
            <person name="Mohr S."/>
            <person name="Kane M.F."/>
            <person name="Williamson J."/>
            <person name="Simpson A.J.G."/>
            <person name="Bulyk M.L."/>
            <person name="Harlow E."/>
            <person name="Marsischky G."/>
            <person name="Kolodner R.D."/>
            <person name="LaBaer J."/>
        </authorList>
    </citation>
    <scope>NUCLEOTIDE SEQUENCE [GENOMIC DNA]</scope>
    <source>
        <strain>ATCC 204508 / S288c</strain>
    </source>
</reference>
<reference key="6">
    <citation type="journal article" date="1998" name="Cold Spring Harb. Symp. Quant. Biol.">
        <title>The yeast RNA polymerase III transcription machinery: a paradigm for eukaryotic gene activation.</title>
        <authorList>
            <person name="Chedin S."/>
            <person name="Ferri M.L."/>
            <person name="Peyroche G."/>
            <person name="Andrau J.-C."/>
            <person name="Jourdain S."/>
            <person name="Lefebvre O."/>
            <person name="Werner M."/>
            <person name="Carles C."/>
            <person name="Sentenac A."/>
        </authorList>
    </citation>
    <scope>REVIEW ON THE RNA POL III COMPLEX</scope>
</reference>
<reference key="7">
    <citation type="journal article" date="2002" name="Proc. Natl. Acad. Sci. U.S.A.">
        <title>The A14-A43 heterodimer subunit in yeast RNA pol I and their relationship to Rpb4-Rpb7 pol II subunits.</title>
        <authorList>
            <person name="Peyroche G."/>
            <person name="Levillain E."/>
            <person name="Siaut M."/>
            <person name="Callebaut I."/>
            <person name="Schultz P."/>
            <person name="Sentenac A."/>
            <person name="Riva M."/>
            <person name="Carles C."/>
        </authorList>
    </citation>
    <scope>IDENTIFICATION IN THE RNA POL I COMPLEX</scope>
</reference>
<reference key="8">
    <citation type="journal article" date="2003" name="Nature">
        <title>Global analysis of protein localization in budding yeast.</title>
        <authorList>
            <person name="Huh W.-K."/>
            <person name="Falvo J.V."/>
            <person name="Gerke L.C."/>
            <person name="Carroll A.S."/>
            <person name="Howson R.W."/>
            <person name="Weissman J.S."/>
            <person name="O'Shea E.K."/>
        </authorList>
    </citation>
    <scope>SUBCELLULAR LOCATION [LARGE SCALE ANALYSIS]</scope>
</reference>
<reference key="9">
    <citation type="journal article" date="2003" name="Nature">
        <title>Global analysis of protein expression in yeast.</title>
        <authorList>
            <person name="Ghaemmaghami S."/>
            <person name="Huh W.-K."/>
            <person name="Bower K."/>
            <person name="Howson R.W."/>
            <person name="Belle A."/>
            <person name="Dephoure N."/>
            <person name="O'Shea E.K."/>
            <person name="Weissman J.S."/>
        </authorList>
    </citation>
    <scope>LEVEL OF PROTEIN EXPRESSION [LARGE SCALE ANALYSIS]</scope>
</reference>
<reference key="10">
    <citation type="journal article" date="2008" name="Mol. Cell. Proteomics">
        <title>A multidimensional chromatography technology for in-depth phosphoproteome analysis.</title>
        <authorList>
            <person name="Albuquerque C.P."/>
            <person name="Smolka M.B."/>
            <person name="Payne S.H."/>
            <person name="Bafna V."/>
            <person name="Eng J."/>
            <person name="Zhou H."/>
        </authorList>
    </citation>
    <scope>PHOSPHORYLATION [LARGE SCALE ANALYSIS] AT THR-68</scope>
    <scope>IDENTIFICATION BY MASS SPECTROMETRY [LARGE SCALE ANALYSIS]</scope>
</reference>
<reference key="11">
    <citation type="journal article" date="2012" name="Proc. Natl. Acad. Sci. U.S.A.">
        <title>N-terminal acetylome analyses and functional insights of the N-terminal acetyltransferase NatB.</title>
        <authorList>
            <person name="Van Damme P."/>
            <person name="Lasa M."/>
            <person name="Polevoda B."/>
            <person name="Gazquez C."/>
            <person name="Elosegui-Artola A."/>
            <person name="Kim D.S."/>
            <person name="De Juan-Pardo E."/>
            <person name="Demeyer K."/>
            <person name="Hole K."/>
            <person name="Larrea E."/>
            <person name="Timmerman E."/>
            <person name="Prieto J."/>
            <person name="Arnesen T."/>
            <person name="Sherman F."/>
            <person name="Gevaert K."/>
            <person name="Aldabe R."/>
        </authorList>
    </citation>
    <scope>ACETYLATION [LARGE SCALE ANALYSIS] AT SER-2</scope>
    <scope>CLEAVAGE OF INITIATOR METHIONINE [LARGE SCALE ANALYSIS]</scope>
    <scope>IDENTIFICATION BY MASS SPECTROMETRY [LARGE SCALE ANALYSIS]</scope>
</reference>
<reference key="12">
    <citation type="journal article" date="1998" name="Nat. Struct. Biol.">
        <title>Eukaryotic RNA polymerase subunit RPB8 is a new relative of the OB family.</title>
        <authorList>
            <person name="Krapp S."/>
            <person name="Kelly G."/>
            <person name="Reischi J."/>
            <person name="Weinzierl R.O.J."/>
            <person name="Matthews S."/>
        </authorList>
    </citation>
    <scope>STRUCTURE BY NMR</scope>
</reference>
<reference key="13">
    <citation type="journal article" date="2003" name="Mol. Cell">
        <title>RNA polymerase II/TFIIF structure and conserved organization of the initiation complex.</title>
        <authorList>
            <person name="Chung W.H."/>
            <person name="Craighead J.L."/>
            <person name="Chang W.H."/>
            <person name="Ezeokonkwo C."/>
            <person name="Bareket-Samish A."/>
            <person name="Kornberg R.D."/>
            <person name="Asturias F.J."/>
        </authorList>
    </citation>
    <scope>ELECTRON MICROSCOPY OF THE RNA POL II/TFIIF COMPLEX</scope>
</reference>
<reference key="14">
    <citation type="journal article" date="2001" name="Science">
        <title>Structural basis of transcription: RNA polymerase II at 2.8 A resolution.</title>
        <authorList>
            <person name="Cramer P."/>
            <person name="Bushnell D.A."/>
            <person name="Kornberg R.D."/>
        </authorList>
    </citation>
    <scope>X-RAY CRYSTALLOGRAPHY (2.8 ANGSTROMS) OF THE RNA POL II CORE COMPLEX</scope>
</reference>
<reference key="15">
    <citation type="journal article" date="2001" name="Science">
        <title>Structural basis of transcription: an RNA polymerase II elongation complex at 3.3 A resolution.</title>
        <authorList>
            <person name="Gnatt A.L."/>
            <person name="Cramer P."/>
            <person name="Fu J."/>
            <person name="Bushnell D.A."/>
            <person name="Kornberg R.D."/>
        </authorList>
    </citation>
    <scope>X-RAY CRYSTALLOGRAPHY (3.3 ANGSTROMS) OF THE RNA POL II CORE COMPLEX</scope>
</reference>
<reference key="16">
    <citation type="journal article" date="2002" name="Proc. Natl. Acad. Sci. U.S.A.">
        <title>Structural basis of transcription: alpha-amanitin-RNA polymerase II cocrystal at 2.8 A resolution.</title>
        <authorList>
            <person name="Bushnell D.A."/>
            <person name="Cramer P."/>
            <person name="Kornberg R.D."/>
        </authorList>
    </citation>
    <scope>X-RAY CRYSTALLOGRAPHY (2.8 ANGSTROMS) OF THE RNA POL II CORE COMPLEX IN COMPLEX WITH ALPHA-AMANITIN</scope>
</reference>
<reference key="17">
    <citation type="journal article" date="2003" name="Cell">
        <title>Architecture of the RNA polymerase II-TFIIS complex and implications for mRNA cleavage.</title>
        <authorList>
            <person name="Kettenberger H."/>
            <person name="Armache K.J."/>
            <person name="Cramer P."/>
        </authorList>
    </citation>
    <scope>X-RAY CRYSTALLOGRAPHY (3.8 ANGSTROMS) OF THE RNA POL II COMPLEX IN COMPLEX WITH DST1</scope>
</reference>
<reference key="18">
    <citation type="journal article" date="2003" name="Proc. Natl. Acad. Sci. U.S.A.">
        <title>Architecture of initiation-competent 12-subunit RNA polymerase II.</title>
        <authorList>
            <person name="Armache K.J."/>
            <person name="Kettenberger H."/>
            <person name="Cramer P."/>
        </authorList>
    </citation>
    <scope>X-RAY CRYSTALLOGRAPHY (4.2 ANGSTROMS) OF THE RNA POL II COMPLEX</scope>
</reference>
<reference key="19">
    <citation type="journal article" date="2003" name="Proc. Natl. Acad. Sci. U.S.A.">
        <title>Complete, 12-subunit RNA polymerase II at 4.1-A resolution: implications for the initiation of transcription.</title>
        <authorList>
            <person name="Bushnell D.A."/>
            <person name="Kornberg R.D."/>
        </authorList>
    </citation>
    <scope>X-RAY CRYSTALLOGRAPHY (4.1 ANGSTROMS) OF THE RNA POL II CORE COMPLEX</scope>
</reference>
<reference key="20">
    <citation type="journal article" date="2004" name="Cell">
        <title>Structural basis of transcription: nucleotide selection by rotation in the RNA polymerase II active center.</title>
        <authorList>
            <person name="Westover K.D."/>
            <person name="Bushnell D.A."/>
            <person name="Kornberg R.D."/>
        </authorList>
    </citation>
    <scope>X-RAY CRYSTALLOGRAPHY (2.3 ANGSTROMS) OF THE RNA POL II CORE COMPLEX</scope>
</reference>
<reference key="21">
    <citation type="journal article" date="2004" name="Mol. Cell">
        <title>Complete RNA polymerase II elongation complex structure and its interactions with NTP and TFIIS.</title>
        <authorList>
            <person name="Kettenberger H."/>
            <person name="Armache K.J."/>
            <person name="Cramer P."/>
        </authorList>
    </citation>
    <scope>X-RAY CRYSTALLOGRAPHY (4.5 ANGSTROMS)</scope>
</reference>
<reference key="22">
    <citation type="journal article" date="2004" name="Science">
        <title>Structural basis of transcription: an RNA polymerase II-TFIIB cocrystal at 4.5 Angstroms.</title>
        <authorList>
            <person name="Bushnell D.A."/>
            <person name="Westover K.D."/>
            <person name="Davis R.E."/>
            <person name="Kornberg R.D."/>
        </authorList>
    </citation>
    <scope>X-RAY CRYSTALLOGRAPHY (4.5 ANGSTROMS) OF THE RNA POL II CORE COMPLEX</scope>
</reference>
<reference key="23">
    <citation type="journal article" date="2005" name="J. Biol. Chem.">
        <title>Structures of complete RNA polymerase II and its subcomplex, Rpb4/7.</title>
        <authorList>
            <person name="Armache K.J."/>
            <person name="Mitterweger S."/>
            <person name="Meinhart A."/>
            <person name="Cramer P."/>
        </authorList>
    </citation>
    <scope>X-RAY CRYSTALLOGRAPHY (3.8 ANGSTROMS) OF THE RNA POL II COMPLEX</scope>
</reference>
<reference key="24">
    <citation type="journal article" date="2006" name="Mol. Cell">
        <title>Structural biology of RNA polymerase III: subcomplex C17/25 X-ray structure and 11 subunit enzyme model.</title>
        <authorList>
            <person name="Jasiak A.J."/>
            <person name="Armache K.J."/>
            <person name="Martens B."/>
            <person name="Jansen R.P."/>
            <person name="Cramer P."/>
        </authorList>
    </citation>
    <scope>3D-STRUCTURE MODELING OF THE POL III CORE COMPLEX</scope>
</reference>
<reference key="25">
    <citation type="journal article" date="2006" name="Nat. Struct. Mol. Biol.">
        <title>Structure of an RNA polymerase II-RNA inhibitor complex elucidates transcription regulation by noncoding RNAs.</title>
        <authorList>
            <person name="Kettenberger H."/>
            <person name="Eisenfuhr A."/>
            <person name="Brueckner F."/>
            <person name="Theis M."/>
            <person name="Famulok M."/>
            <person name="Cramer P."/>
        </authorList>
    </citation>
    <scope>X-RAY CRYSTALLOGRAPHY (3.8 ANGSTROMS) OF THE RNA POL II COMPLEX IN COMPLEX WITH INHIBITING NON-CODING RNA</scope>
</reference>
<reference key="26">
    <citation type="journal article" date="2006" name="Structure">
        <title>Phasing RNA polymerase II using intrinsically bound Zn atoms: an updated structural model.</title>
        <authorList>
            <person name="Meyer P.A."/>
            <person name="Ye P."/>
            <person name="Zhang M."/>
            <person name="Suh M.H."/>
            <person name="Fu J."/>
        </authorList>
    </citation>
    <scope>X-RAY CRYSTALLOGRAPHY (4.15 ANGSTROMS) OF THE RNA POL II COMPLEX</scope>
</reference>
<reference key="27">
    <citation type="journal article" date="2007" name="Cell">
        <title>Functional architecture of RNA polymerase I.</title>
        <authorList>
            <person name="Kuhn C.D."/>
            <person name="Geiger S.R."/>
            <person name="Baumli S."/>
            <person name="Gartmann M."/>
            <person name="Gerber J."/>
            <person name="Jennebach S."/>
            <person name="Mielke T."/>
            <person name="Tschochner H."/>
            <person name="Beckmann R."/>
            <person name="Cramer P."/>
        </authorList>
    </citation>
    <scope>STRUCTURE BY ELECTRON MICROSCOPY (12.00 ANGSTROMS) OF THE POL I COMPLEX</scope>
    <scope>FUNCTION</scope>
    <scope>SUBUNIT</scope>
</reference>
<reference key="28">
    <citation type="journal article" date="2013" name="Nature">
        <title>Crystal structure of the 14-subunit RNA polymerase I.</title>
        <authorList>
            <person name="Fernandez-Tornero C."/>
            <person name="Moreno-Morcillo M."/>
            <person name="Rashid U.J."/>
            <person name="Taylor N.M."/>
            <person name="Ruiz F.M."/>
            <person name="Gruene T."/>
            <person name="Legrand P."/>
            <person name="Steuerwald U."/>
            <person name="Muller C.W."/>
        </authorList>
    </citation>
    <scope>X-RAY CRYSTALLOGRAPHY (3.0 ANGSTROMS) OF THE POL I COMPLEX</scope>
    <scope>FUNCTION</scope>
    <scope>SUBUNIT</scope>
</reference>
<reference key="29">
    <citation type="journal article" date="2013" name="Nature">
        <title>RNA polymerase I structure and transcription regulation.</title>
        <authorList>
            <person name="Engel C."/>
            <person name="Sainsbury S."/>
            <person name="Cheung A.C."/>
            <person name="Kostrewa D."/>
            <person name="Cramer P."/>
        </authorList>
    </citation>
    <scope>X-RAY CRYSTALLOGRAPHY (2.8 ANGSTROMS) OF THE POL I COMPLEX</scope>
    <scope>FUNCTION</scope>
    <scope>SUBUNIT</scope>
</reference>
<evidence type="ECO:0000250" key="1"/>
<evidence type="ECO:0000269" key="2">
    <source>
    </source>
</evidence>
<evidence type="ECO:0000269" key="3">
    <source>
    </source>
</evidence>
<evidence type="ECO:0000269" key="4">
    <source>
    </source>
</evidence>
<evidence type="ECO:0000269" key="5">
    <source>
    </source>
</evidence>
<evidence type="ECO:0000269" key="6">
    <source>
    </source>
</evidence>
<evidence type="ECO:0000269" key="7">
    <source>
    </source>
</evidence>
<evidence type="ECO:0000269" key="8">
    <source>
    </source>
</evidence>
<evidence type="ECO:0000269" key="9">
    <source>
    </source>
</evidence>
<evidence type="ECO:0000269" key="10">
    <source>
    </source>
</evidence>
<evidence type="ECO:0000305" key="11"/>
<evidence type="ECO:0007744" key="12">
    <source>
    </source>
</evidence>
<evidence type="ECO:0007744" key="13">
    <source>
    </source>
</evidence>
<evidence type="ECO:0007829" key="14">
    <source>
        <dbReference type="PDB" id="1TWF"/>
    </source>
</evidence>
<evidence type="ECO:0007829" key="15">
    <source>
        <dbReference type="PDB" id="6RUI"/>
    </source>
</evidence>
<evidence type="ECO:0007829" key="16">
    <source>
        <dbReference type="PDB" id="6RUO"/>
    </source>
</evidence>
<evidence type="ECO:0007829" key="17">
    <source>
        <dbReference type="PDB" id="7O4J"/>
    </source>
</evidence>
<evidence type="ECO:0007829" key="18">
    <source>
        <dbReference type="PDB" id="8JCH"/>
    </source>
</evidence>
<evidence type="ECO:0007829" key="19">
    <source>
        <dbReference type="PDB" id="8TVY"/>
    </source>
</evidence>
<gene>
    <name type="primary">RPB8</name>
    <name type="ordered locus">YOR224C</name>
    <name type="ORF">YOR50-14</name>
</gene>
<keyword id="KW-0002">3D-structure</keyword>
<keyword id="KW-0007">Acetylation</keyword>
<keyword id="KW-0238">DNA-binding</keyword>
<keyword id="KW-0240">DNA-directed RNA polymerase</keyword>
<keyword id="KW-0539">Nucleus</keyword>
<keyword id="KW-0597">Phosphoprotein</keyword>
<keyword id="KW-1185">Reference proteome</keyword>
<keyword id="KW-0690">Ribosome biogenesis</keyword>
<keyword id="KW-0804">Transcription</keyword>
<protein>
    <recommendedName>
        <fullName>DNA-directed RNA polymerases I, II, and III subunit RPABC3</fullName>
        <shortName>RNA polymerases I, II, and III subunit ABC3</shortName>
    </recommendedName>
    <alternativeName>
        <fullName>ABC14.4</fullName>
    </alternativeName>
    <alternativeName>
        <fullName>ABC14.5</fullName>
    </alternativeName>
    <alternativeName>
        <fullName>DNA-directed RNA polymerases I, II, and III 14.5 kDa polypeptide</fullName>
    </alternativeName>
</protein>
<feature type="initiator methionine" description="Removed" evidence="13">
    <location>
        <position position="1"/>
    </location>
</feature>
<feature type="chain" id="PRO_0000074001" description="DNA-directed RNA polymerases I, II, and III subunit RPABC3">
    <location>
        <begin position="2"/>
        <end position="146"/>
    </location>
</feature>
<feature type="region of interest" description="Non-specific ssDNA binding" evidence="1">
    <location>
        <begin position="16"/>
        <end position="39"/>
    </location>
</feature>
<feature type="modified residue" description="N-acetylserine" evidence="13">
    <location>
        <position position="2"/>
    </location>
</feature>
<feature type="modified residue" description="Phosphothreonine" evidence="12">
    <location>
        <position position="68"/>
    </location>
</feature>
<feature type="strand" evidence="16">
    <location>
        <begin position="4"/>
        <end position="6"/>
    </location>
</feature>
<feature type="strand" evidence="14">
    <location>
        <begin position="7"/>
        <end position="16"/>
    </location>
</feature>
<feature type="strand" evidence="14">
    <location>
        <begin position="21"/>
        <end position="32"/>
    </location>
</feature>
<feature type="strand" evidence="14">
    <location>
        <begin position="37"/>
        <end position="43"/>
    </location>
</feature>
<feature type="helix" evidence="14">
    <location>
        <begin position="44"/>
        <end position="46"/>
    </location>
</feature>
<feature type="strand" evidence="14">
    <location>
        <begin position="54"/>
        <end position="58"/>
    </location>
</feature>
<feature type="strand" evidence="17">
    <location>
        <begin position="64"/>
        <end position="66"/>
    </location>
</feature>
<feature type="helix" evidence="18">
    <location>
        <begin position="72"/>
        <end position="74"/>
    </location>
</feature>
<feature type="strand" evidence="19">
    <location>
        <begin position="75"/>
        <end position="77"/>
    </location>
</feature>
<feature type="turn" evidence="14">
    <location>
        <begin position="84"/>
        <end position="86"/>
    </location>
</feature>
<feature type="helix" evidence="15">
    <location>
        <begin position="89"/>
        <end position="91"/>
    </location>
</feature>
<feature type="strand" evidence="14">
    <location>
        <begin position="93"/>
        <end position="101"/>
    </location>
</feature>
<feature type="turn" evidence="18">
    <location>
        <begin position="108"/>
        <end position="110"/>
    </location>
</feature>
<feature type="strand" evidence="14">
    <location>
        <begin position="112"/>
        <end position="118"/>
    </location>
</feature>
<feature type="strand" evidence="14">
    <location>
        <begin position="121"/>
        <end position="128"/>
    </location>
</feature>
<feature type="turn" evidence="14">
    <location>
        <begin position="129"/>
        <end position="133"/>
    </location>
</feature>
<feature type="strand" evidence="14">
    <location>
        <begin position="136"/>
        <end position="138"/>
    </location>
</feature>
<feature type="strand" evidence="14">
    <location>
        <begin position="140"/>
        <end position="145"/>
    </location>
</feature>
<organism>
    <name type="scientific">Saccharomyces cerevisiae (strain ATCC 204508 / S288c)</name>
    <name type="common">Baker's yeast</name>
    <dbReference type="NCBI Taxonomy" id="559292"/>
    <lineage>
        <taxon>Eukaryota</taxon>
        <taxon>Fungi</taxon>
        <taxon>Dikarya</taxon>
        <taxon>Ascomycota</taxon>
        <taxon>Saccharomycotina</taxon>
        <taxon>Saccharomycetes</taxon>
        <taxon>Saccharomycetales</taxon>
        <taxon>Saccharomycetaceae</taxon>
        <taxon>Saccharomyces</taxon>
    </lineage>
</organism>
<sequence>MSNTLFDDIFQVSEVDPGRYNKVCRIEAASTTQDQCKLTLDINVELFPVAAQDSLTVTIASSLNLEDTPANDSSATRSWRPPQAGDRSLADDYDYVMYGTAYKFEEVSKDLIAVYYSFGGLLMRLEGNYRNLNNLKQENAYLLIRR</sequence>